<evidence type="ECO:0000250" key="1">
    <source>
        <dbReference type="UniProtKB" id="Q3UKC1"/>
    </source>
</evidence>
<evidence type="ECO:0000255" key="2"/>
<evidence type="ECO:0000255" key="3">
    <source>
        <dbReference type="PROSITE-ProRule" id="PRU01253"/>
    </source>
</evidence>
<evidence type="ECO:0000256" key="4">
    <source>
        <dbReference type="SAM" id="MobiDB-lite"/>
    </source>
</evidence>
<evidence type="ECO:0000269" key="5">
    <source>
    </source>
</evidence>
<evidence type="ECO:0000269" key="6">
    <source>
    </source>
</evidence>
<evidence type="ECO:0000269" key="7">
    <source>
    </source>
</evidence>
<evidence type="ECO:0000269" key="8">
    <source>
    </source>
</evidence>
<evidence type="ECO:0000269" key="9">
    <source>
    </source>
</evidence>
<evidence type="ECO:0000269" key="10">
    <source>
    </source>
</evidence>
<evidence type="ECO:0000269" key="11">
    <source>
    </source>
</evidence>
<evidence type="ECO:0000269" key="12">
    <source>
    </source>
</evidence>
<evidence type="ECO:0000269" key="13">
    <source>
    </source>
</evidence>
<evidence type="ECO:0000269" key="14">
    <source>
    </source>
</evidence>
<evidence type="ECO:0000269" key="15">
    <source>
    </source>
</evidence>
<evidence type="ECO:0000269" key="16">
    <source>
    </source>
</evidence>
<evidence type="ECO:0000269" key="17">
    <source>
    </source>
</evidence>
<evidence type="ECO:0000269" key="18">
    <source>
    </source>
</evidence>
<evidence type="ECO:0000269" key="19">
    <source>
    </source>
</evidence>
<evidence type="ECO:0000269" key="20">
    <source>
    </source>
</evidence>
<evidence type="ECO:0000269" key="21">
    <source>
    </source>
</evidence>
<evidence type="ECO:0000269" key="22">
    <source>
    </source>
</evidence>
<evidence type="ECO:0000269" key="23">
    <source>
    </source>
</evidence>
<evidence type="ECO:0000269" key="24">
    <source>
    </source>
</evidence>
<evidence type="ECO:0000269" key="25">
    <source>
    </source>
</evidence>
<evidence type="ECO:0000303" key="26">
    <source>
    </source>
</evidence>
<evidence type="ECO:0000303" key="27">
    <source>
    </source>
</evidence>
<evidence type="ECO:0000303" key="28">
    <source>
    </source>
</evidence>
<evidence type="ECO:0000303" key="29">
    <source ref="4"/>
</evidence>
<evidence type="ECO:0000303" key="30">
    <source ref="6"/>
</evidence>
<evidence type="ECO:0000305" key="31"/>
<evidence type="ECO:0007744" key="32">
    <source>
        <dbReference type="PDB" id="5AAS"/>
    </source>
</evidence>
<evidence type="ECO:0007744" key="33">
    <source>
        <dbReference type="PDB" id="5YT6"/>
    </source>
</evidence>
<evidence type="ECO:0007744" key="34">
    <source>
        <dbReference type="PDB" id="5Z7G"/>
    </source>
</evidence>
<evidence type="ECO:0007744" key="35">
    <source>
    </source>
</evidence>
<evidence type="ECO:0007744" key="36">
    <source>
    </source>
</evidence>
<evidence type="ECO:0007744" key="37">
    <source>
    </source>
</evidence>
<evidence type="ECO:0007829" key="38">
    <source>
        <dbReference type="PDB" id="4BMJ"/>
    </source>
</evidence>
<evidence type="ECO:0007829" key="39">
    <source>
        <dbReference type="PDB" id="4NLH"/>
    </source>
</evidence>
<evidence type="ECO:0007829" key="40">
    <source>
        <dbReference type="PDB" id="5YT6"/>
    </source>
</evidence>
<evidence type="ECO:0007829" key="41">
    <source>
        <dbReference type="PDB" id="5Z7G"/>
    </source>
</evidence>
<sequence>MTSFQEVPLQTSNFAHVIFQNVAKSYLPNAHLECHYTLTPYIHPHPKDWVGIFKVGWSTARDYYTFLWSPMPEHYVEGSTVNCVLAFQGYYLPNDDGEFYQFCYVTHKGEIRGASTPFQFRASSPVEELLTMEDEGNSDMLVVTTKAGLLELKIEKTMKEKEELLKLIAVLEKETAQLREQVGRMERELNHEKERCDQLQAEQKGLTEVTQSLKMENEEFKKRFSDATSKAHQLEEDIVSVTHKAIEKETELDSLKDKLKKAQHEREQLECQLKTEKDEKELYKVHLKNTEIENTKLMSEVQTLKNLDGNKESVITHFKEEIGRLQLCLAEKENLQRTFLLTTSSKEDTCFLKEQLRKAEEQVQATRQEVVFLAKELSDAVNVRDRTMADLHTARLENEKVKKQLADAVAELKLNAMKKDQDKTDTLEHELRREVEDLKLRLQMAADHYKEKFKECQRLQKQINKLSDQSANNNNVFTKKTGNQQKVNDASVNTDPATSASTVDVKPSPSAAEADFDIVTKGQVCEMTKEIADKTEKYNKCKQLLQDEKAKCNKYADELAKMELKWKEQVKIAENVKLELAEVQDNYKELKRSLENPAERKMEGQNSQSPQCFKTCSEQNGYVLTLSNAQPVLQYGNPYASQETRDGADGAFYPDEIQRPPVRVPSWGLEDNVVCSQPARNFSRPDGLEDSEDSKEDENVPTAPDPPSQHLRGHGTGFCFDSSFDVHKKCPLCELMFPPNYDQSKFEEHVESHWKVCPMCSEQFPPDYDQQVFERHVQTHFDQNVLNFD</sequence>
<gene>
    <name type="primary">TAX1BP1</name>
    <name type="synonym">T6BP</name>
    <name type="ORF">PRO0105</name>
</gene>
<feature type="chain" id="PRO_0000234554" description="Tax1-binding protein 1">
    <location>
        <begin position="1"/>
        <end position="789"/>
    </location>
</feature>
<feature type="zinc finger region" description="UBZ1-type 1" evidence="3">
    <location>
        <begin position="727"/>
        <end position="753"/>
    </location>
</feature>
<feature type="zinc finger region" description="UBZ1-type 2" evidence="3">
    <location>
        <begin position="754"/>
        <end position="780"/>
    </location>
</feature>
<feature type="region of interest" description="Oligomerization">
    <location>
        <begin position="320"/>
        <end position="420"/>
    </location>
</feature>
<feature type="region of interest" description="Disordered" evidence="4">
    <location>
        <begin position="481"/>
        <end position="508"/>
    </location>
</feature>
<feature type="region of interest" description="Disordered" evidence="4">
    <location>
        <begin position="639"/>
        <end position="660"/>
    </location>
</feature>
<feature type="region of interest" description="Disordered" evidence="4">
    <location>
        <begin position="678"/>
        <end position="712"/>
    </location>
</feature>
<feature type="coiled-coil region" evidence="2">
    <location>
        <begin position="144"/>
        <end position="599"/>
    </location>
</feature>
<feature type="compositionally biased region" description="Polar residues" evidence="4">
    <location>
        <begin position="481"/>
        <end position="502"/>
    </location>
</feature>
<feature type="binding site" evidence="3">
    <location>
        <position position="730"/>
    </location>
    <ligand>
        <name>Zn(2+)</name>
        <dbReference type="ChEBI" id="CHEBI:29105"/>
        <label>1</label>
    </ligand>
</feature>
<feature type="binding site" evidence="3">
    <location>
        <position position="733"/>
    </location>
    <ligand>
        <name>Zn(2+)</name>
        <dbReference type="ChEBI" id="CHEBI:29105"/>
        <label>1</label>
    </ligand>
</feature>
<feature type="binding site" evidence="3">
    <location>
        <position position="749"/>
    </location>
    <ligand>
        <name>Zn(2+)</name>
        <dbReference type="ChEBI" id="CHEBI:29105"/>
        <label>1</label>
    </ligand>
</feature>
<feature type="binding site" evidence="3">
    <location>
        <position position="753"/>
    </location>
    <ligand>
        <name>Zn(2+)</name>
        <dbReference type="ChEBI" id="CHEBI:29105"/>
        <label>1</label>
    </ligand>
</feature>
<feature type="binding site" evidence="3">
    <location>
        <position position="757"/>
    </location>
    <ligand>
        <name>Zn(2+)</name>
        <dbReference type="ChEBI" id="CHEBI:29105"/>
        <label>2</label>
    </ligand>
</feature>
<feature type="binding site" evidence="3">
    <location>
        <position position="760"/>
    </location>
    <ligand>
        <name>Zn(2+)</name>
        <dbReference type="ChEBI" id="CHEBI:29105"/>
        <label>2</label>
    </ligand>
</feature>
<feature type="binding site" evidence="3">
    <location>
        <position position="776"/>
    </location>
    <ligand>
        <name>Zn(2+)</name>
        <dbReference type="ChEBI" id="CHEBI:29105"/>
        <label>2</label>
    </ligand>
</feature>
<feature type="binding site" evidence="3">
    <location>
        <position position="780"/>
    </location>
    <ligand>
        <name>Zn(2+)</name>
        <dbReference type="ChEBI" id="CHEBI:29105"/>
        <label>2</label>
    </ligand>
</feature>
<feature type="modified residue" description="Phosphoserine" evidence="1">
    <location>
        <position position="124"/>
    </location>
</feature>
<feature type="modified residue" description="Phosphoserine" evidence="37">
    <location>
        <position position="138"/>
    </location>
</feature>
<feature type="modified residue" description="Phosphoserine" evidence="35">
    <location>
        <position position="225"/>
    </location>
</feature>
<feature type="modified residue" description="Phosphoserine; by IKKA" evidence="12">
    <location>
        <position position="593"/>
    </location>
</feature>
<feature type="modified residue" description="Phosphoserine" evidence="1">
    <location>
        <position position="609"/>
    </location>
</feature>
<feature type="modified residue" description="Phosphoserine; by IKKA" evidence="12 36">
    <location>
        <position position="666"/>
    </location>
</feature>
<feature type="splice variant" id="VSP_018354" description="In isoform 3." evidence="31">
    <location>
        <begin position="1"/>
        <end position="184"/>
    </location>
</feature>
<feature type="splice variant" id="VSP_045921" description="In isoform 4." evidence="28">
    <location>
        <begin position="1"/>
        <end position="157"/>
    </location>
</feature>
<feature type="splice variant" id="VSP_018355" description="In isoform 2, isoform 3 and isoform 4." evidence="26 27 28 29 30">
    <location>
        <begin position="604"/>
        <end position="645"/>
    </location>
</feature>
<feature type="sequence variant" id="VAR_051415" description="In dbSNP:rs7809260.">
    <original>S</original>
    <variation>N</variation>
    <location>
        <position position="58"/>
    </location>
</feature>
<feature type="sequence variant" id="VAR_026286" description="In dbSNP:rs11540483." evidence="9">
    <original>L</original>
    <variation>I</variation>
    <location>
        <position position="307"/>
    </location>
</feature>
<feature type="sequence variant" id="VAR_035665" description="In a breast cancer sample; somatic mutation." evidence="10">
    <original>Q</original>
    <variation>R</variation>
    <location>
        <position position="457"/>
    </location>
</feature>
<feature type="mutagenesis site" description="Complete loss of TBK1 and RB1CC1 binding." evidence="23">
    <original>A</original>
    <variation>Q</variation>
    <location>
        <position position="114"/>
    </location>
</feature>
<feature type="mutagenesis site" description="Complete loss of MAP1LC3B binding." evidence="15">
    <original>V</original>
    <variation>S</variation>
    <location>
        <position position="143"/>
    </location>
</feature>
<feature type="mutagenesis site" description="Normal affinity for ubiquitin." evidence="16">
    <original>Q</original>
    <variation>A</variation>
    <location>
        <position position="771"/>
    </location>
</feature>
<feature type="mutagenesis site" description="Reduced affinity for ubiquitin." evidence="16">
    <original>E</original>
    <variation>A</variation>
    <location>
        <position position="774"/>
    </location>
</feature>
<feature type="mutagenesis site" description="Normal affinity for ubiquitin." evidence="16">
    <original>R</original>
    <variation>A</variation>
    <location>
        <position position="775"/>
    </location>
</feature>
<feature type="mutagenesis site" description="Reduced affinity for ubiquitin." evidence="16">
    <original>V</original>
    <variation>S</variation>
    <location>
        <position position="777"/>
    </location>
</feature>
<feature type="mutagenesis site" description="Reduced affinity for ubiquitin." evidence="16">
    <original>Q</original>
    <variation>A</variation>
    <location>
        <position position="778"/>
    </location>
</feature>
<feature type="mutagenesis site" description="Reduced affinity for ubiquitin." evidence="16">
    <original>F</original>
    <variation>A</variation>
    <location>
        <position position="781"/>
    </location>
</feature>
<feature type="sequence conflict" description="In Ref. 5; BAG59309." evidence="31" ref="5">
    <original>L</original>
    <variation>P</variation>
    <location>
        <position position="199"/>
    </location>
</feature>
<feature type="sequence conflict" description="In Ref. 1; AAA75595." evidence="31" ref="1">
    <original>QL</original>
    <variation>HV</variation>
    <location>
        <begin position="233"/>
        <end position="234"/>
    </location>
</feature>
<feature type="helix" evidence="41">
    <location>
        <begin position="13"/>
        <end position="15"/>
    </location>
</feature>
<feature type="strand" evidence="39">
    <location>
        <begin position="16"/>
        <end position="21"/>
    </location>
</feature>
<feature type="strand" evidence="39">
    <location>
        <begin position="24"/>
        <end position="26"/>
    </location>
</feature>
<feature type="strand" evidence="39">
    <location>
        <begin position="32"/>
        <end position="38"/>
    </location>
</feature>
<feature type="strand" evidence="39">
    <location>
        <begin position="49"/>
        <end position="54"/>
    </location>
</feature>
<feature type="helix" evidence="39">
    <location>
        <begin position="60"/>
        <end position="62"/>
    </location>
</feature>
<feature type="strand" evidence="39">
    <location>
        <begin position="63"/>
        <end position="68"/>
    </location>
</feature>
<feature type="strand" evidence="39">
    <location>
        <begin position="81"/>
        <end position="87"/>
    </location>
</feature>
<feature type="helix" evidence="39">
    <location>
        <begin position="89"/>
        <end position="91"/>
    </location>
</feature>
<feature type="strand" evidence="39">
    <location>
        <begin position="100"/>
        <end position="105"/>
    </location>
</feature>
<feature type="strand" evidence="39">
    <location>
        <begin position="111"/>
        <end position="114"/>
    </location>
</feature>
<feature type="strand" evidence="39">
    <location>
        <begin position="118"/>
        <end position="121"/>
    </location>
</feature>
<feature type="strand" evidence="38">
    <location>
        <begin position="727"/>
        <end position="729"/>
    </location>
</feature>
<feature type="strand" evidence="38">
    <location>
        <begin position="731"/>
        <end position="734"/>
    </location>
</feature>
<feature type="helix" evidence="38">
    <location>
        <begin position="743"/>
        <end position="751"/>
    </location>
</feature>
<feature type="strand" evidence="38">
    <location>
        <begin position="754"/>
        <end position="756"/>
    </location>
</feature>
<feature type="turn" evidence="40">
    <location>
        <begin position="758"/>
        <end position="760"/>
    </location>
</feature>
<feature type="helix" evidence="40">
    <location>
        <begin position="770"/>
        <end position="779"/>
    </location>
</feature>
<feature type="turn" evidence="40">
    <location>
        <begin position="780"/>
        <end position="782"/>
    </location>
</feature>
<protein>
    <recommendedName>
        <fullName>Tax1-binding protein 1</fullName>
    </recommendedName>
    <alternativeName>
        <fullName>TRAF6-binding protein</fullName>
    </alternativeName>
</protein>
<comment type="function">
    <text evidence="5 6 11 13 15 17 18 19 20 21 23 25">Ubiquitin-binding adapter that participates in inflammatory, antiviral and innate immune processes as well as selective autophagy regulation (PubMed:29940186, PubMed:30459273, PubMed:30909570). Plays a key role in the negative regulation of NF-kappa-B and IRF3 signalings by acting as an adapter for the ubiquitin-editing enzyme A20/TNFAIP3 to bind and inactivate its substrates (PubMed:17703191). Disrupts the interactions between the E3 ubiquitin ligase TRAF3 and TBK1/IKBKE to attenuate 'Lys63'-linked polyubiquitination of TBK1 and thereby IFN-beta production (PubMed:21885437). Also recruits A20/TNFAIP3 to ubiquitinated signaling proteins TRAF6 and RIPK1, leading to their deubiquitination and disruption of IL-1 and TNF-induced NF-kappa-B signaling pathways (PubMed:17703191). Inhibits virus-induced apoptosis by inducing the 'Lys-48'-linked polyubiquitination and degradation of MAVS via recruitment of the E3 ligase ITCH, thereby attenuating MAVS-mediated apoptosis signaling (PubMed:27736772). As a macroautophagy/autophagy receptor, facilitates the xenophagic clearance of pathogenic bacteria such as Salmonella typhimurium and Mycobacterium tuberculosis (PubMed:26451915). Upon NBR1 recruitment to the SQSTM1-ubiquitin condensates, acts as the major recruiter of RB1CC1 to these ubiquitin condensates to promote their autophagic degradation (PubMed:33226137, PubMed:34471133). Mediates the autophagic degradation of other substrates including TICAM1 (PubMed:28898289).</text>
</comment>
<comment type="subunit">
    <text evidence="5 6 8 11 13 17 18 20 22 23 25">Homooligomer. Interacts with TNFAIP3. Interacts with STARD13. Interacts with MYO6 (PubMed:31371777). Interacts with TOM1; the interaction is indirect and is mediated by MYO6, which acts as a bridge between TOM1 and TAX1BP1 (PubMed:31371777). Interacts with MAVS; this interaction induces MAVS polyubiquitination (PubMed:27736772). Interacts with TNIP1 (PubMed:21885437). Interacts with TRAF6; this interaction mediates deubiquitination of TRAF6 and inhibition of NF-kappa-B activation (PubMed:17703191). Interacts with RIPK1; this interaction negatively regulates RIPK1 ubiquitination (PubMed:17703191). Interacts with NBR1 (PubMed:33226137, PubMed:34471133). Interacts with TBK1 (PubMed:33226137). Interacts with RB1CC1 (PubMed:33226137, PubMed:34471133). Interacts with SQSTM1 (PubMed:34471133). Interacts with AZI2 (PubMed:30459273). Interacts with TICAM1 and TRIM32; these interactions target TICAM1 to TAX1BP1-mediated selective autophagic degradation (PubMed:28898289).</text>
</comment>
<comment type="subunit">
    <text evidence="5 7">(Microbial infection) Interacts with the HTLV-1 protein Tax.</text>
</comment>
<comment type="subunit">
    <text evidence="24">(Microbial infection) Interacts with Respiratory syncytial virus protein N; this interaction may promote viral growth by inhibiting the innate immune response.</text>
</comment>
<comment type="subunit">
    <text evidence="21">(Microbial infection) Interacts with Lassa virus protein Z.</text>
</comment>
<comment type="subunit">
    <text evidence="21">(Microbial infection) Interacts with Mopeia virus protein Z.</text>
</comment>
<comment type="interaction">
    <interactant intactId="EBI-529518">
        <id>Q86VP1</id>
    </interactant>
    <interactant intactId="EBI-742108">
        <id>Q96B23</id>
        <label>ARK2N</label>
    </interactant>
    <organismsDiffer>false</organismsDiffer>
    <experiments>3</experiments>
</comment>
<comment type="interaction">
    <interactant intactId="EBI-529518">
        <id>Q86VP1</id>
    </interactant>
    <interactant intactId="EBI-712912">
        <id>Q9HC52</id>
        <label>CBX8</label>
    </interactant>
    <organismsDiffer>false</organismsDiffer>
    <experiments>3</experiments>
</comment>
<comment type="interaction">
    <interactant intactId="EBI-529518">
        <id>Q86VP1</id>
    </interactant>
    <interactant intactId="EBI-81249">
        <id>O15111</id>
        <label>CHUK</label>
    </interactant>
    <organismsDiffer>false</organismsDiffer>
    <experiments>2</experiments>
</comment>
<comment type="interaction">
    <interactant intactId="EBI-529518">
        <id>Q86VP1</id>
    </interactant>
    <interactant intactId="EBI-389534">
        <id>P83436</id>
        <label>COG7</label>
    </interactant>
    <organismsDiffer>false</organismsDiffer>
    <experiments>10</experiments>
</comment>
<comment type="interaction">
    <interactant intactId="EBI-529518">
        <id>Q86VP1</id>
    </interactant>
    <interactant intactId="EBI-5453285">
        <id>Q2TBE0</id>
        <label>CWF19L2</label>
    </interactant>
    <organismsDiffer>false</organismsDiffer>
    <experiments>3</experiments>
</comment>
<comment type="interaction">
    <interactant intactId="EBI-529518">
        <id>Q86VP1</id>
    </interactant>
    <interactant intactId="EBI-949911">
        <id>Q9P0U4</id>
        <label>CXXC1</label>
    </interactant>
    <organismsDiffer>false</organismsDiffer>
    <experiments>3</experiments>
</comment>
<comment type="interaction">
    <interactant intactId="EBI-529518">
        <id>Q86VP1</id>
    </interactant>
    <interactant intactId="EBI-12743307">
        <id>Q9P0U4-2</id>
        <label>CXXC1</label>
    </interactant>
    <organismsDiffer>false</organismsDiffer>
    <experiments>3</experiments>
</comment>
<comment type="interaction">
    <interactant intactId="EBI-529518">
        <id>Q86VP1</id>
    </interactant>
    <interactant intactId="EBI-77321">
        <id>Q9UER7</id>
        <label>DAXX</label>
    </interactant>
    <organismsDiffer>false</organismsDiffer>
    <experiments>3</experiments>
</comment>
<comment type="interaction">
    <interactant intactId="EBI-529518">
        <id>Q86VP1</id>
    </interactant>
    <interactant intactId="EBI-724310">
        <id>Q15038</id>
        <label>DAZAP2</label>
    </interactant>
    <organismsDiffer>false</organismsDiffer>
    <experiments>6</experiments>
</comment>
<comment type="interaction">
    <interactant intactId="EBI-529518">
        <id>Q86VP1</id>
    </interactant>
    <interactant intactId="EBI-745191">
        <id>P60981</id>
        <label>DSTN</label>
    </interactant>
    <organismsDiffer>false</organismsDiffer>
    <experiments>6</experiments>
</comment>
<comment type="interaction">
    <interactant intactId="EBI-529518">
        <id>Q86VP1</id>
    </interactant>
    <interactant intactId="EBI-744586">
        <id>Q9Y6C2</id>
        <label>EMILIN1</label>
    </interactant>
    <organismsDiffer>false</organismsDiffer>
    <experiments>5</experiments>
</comment>
<comment type="interaction">
    <interactant intactId="EBI-529518">
        <id>Q86VP1</id>
    </interactant>
    <interactant intactId="EBI-11748557">
        <id>Q9Y6C2-2</id>
        <label>EMILIN1</label>
    </interactant>
    <organismsDiffer>false</organismsDiffer>
    <experiments>3</experiments>
</comment>
<comment type="interaction">
    <interactant intactId="EBI-529518">
        <id>Q86VP1</id>
    </interactant>
    <interactant intactId="EBI-719941">
        <id>Q3B820</id>
        <label>FAM161A</label>
    </interactant>
    <organismsDiffer>false</organismsDiffer>
    <experiments>3</experiments>
</comment>
<comment type="interaction">
    <interactant intactId="EBI-529518">
        <id>Q86VP1</id>
    </interactant>
    <interactant intactId="EBI-7957930">
        <id>Q92567</id>
        <label>FAM168A</label>
    </interactant>
    <organismsDiffer>false</organismsDiffer>
    <experiments>3</experiments>
</comment>
<comment type="interaction">
    <interactant intactId="EBI-529518">
        <id>Q86VP1</id>
    </interactant>
    <interactant intactId="EBI-11978259">
        <id>Q92567-2</id>
        <label>FAM168A</label>
    </interactant>
    <organismsDiffer>false</organismsDiffer>
    <experiments>3</experiments>
</comment>
<comment type="interaction">
    <interactant intactId="EBI-529518">
        <id>Q86VP1</id>
    </interactant>
    <interactant intactId="EBI-6658203">
        <id>Q86YD7</id>
        <label>FAM90A1</label>
    </interactant>
    <organismsDiffer>false</organismsDiffer>
    <experiments>3</experiments>
</comment>
<comment type="interaction">
    <interactant intactId="EBI-529518">
        <id>Q86VP1</id>
    </interactant>
    <interactant intactId="EBI-3956892">
        <id>Q99958</id>
        <label>FOXC2</label>
    </interactant>
    <organismsDiffer>false</organismsDiffer>
    <experiments>3</experiments>
</comment>
<comment type="interaction">
    <interactant intactId="EBI-529518">
        <id>Q86VP1</id>
    </interactant>
    <interactant intactId="EBI-746969">
        <id>Q9H0R8</id>
        <label>GABARAPL1</label>
    </interactant>
    <organismsDiffer>false</organismsDiffer>
    <experiments>3</experiments>
</comment>
<comment type="interaction">
    <interactant intactId="EBI-529518">
        <id>Q86VP1</id>
    </interactant>
    <interactant intactId="EBI-720116">
        <id>P60520</id>
        <label>GABARAPL2</label>
    </interactant>
    <organismsDiffer>false</organismsDiffer>
    <experiments>3</experiments>
</comment>
<comment type="interaction">
    <interactant intactId="EBI-529518">
        <id>Q86VP1</id>
    </interactant>
    <interactant intactId="EBI-747754">
        <id>P28799</id>
        <label>GRN</label>
    </interactant>
    <organismsDiffer>false</organismsDiffer>
    <experiments>3</experiments>
</comment>
<comment type="interaction">
    <interactant intactId="EBI-529518">
        <id>Q86VP1</id>
    </interactant>
    <interactant intactId="EBI-10330057">
        <id>V9HW29</id>
        <label>HEL-S-61</label>
    </interactant>
    <organismsDiffer>false</organismsDiffer>
    <experiments>3</experiments>
</comment>
<comment type="interaction">
    <interactant intactId="EBI-529518">
        <id>Q86VP1</id>
    </interactant>
    <interactant intactId="EBI-11955401">
        <id>Q86VF2-5</id>
        <label>IGFN1</label>
    </interactant>
    <organismsDiffer>false</organismsDiffer>
    <experiments>3</experiments>
</comment>
<comment type="interaction">
    <interactant intactId="EBI-529518">
        <id>Q86VP1</id>
    </interactant>
    <interactant intactId="EBI-2556193">
        <id>Q63ZY3</id>
        <label>KANK2</label>
    </interactant>
    <organismsDiffer>false</organismsDiffer>
    <experiments>3</experiments>
</comment>
<comment type="interaction">
    <interactant intactId="EBI-529518">
        <id>Q86VP1</id>
    </interactant>
    <interactant intactId="EBI-399080">
        <id>Q92993</id>
        <label>KAT5</label>
    </interactant>
    <organismsDiffer>false</organismsDiffer>
    <experiments>3</experiments>
</comment>
<comment type="interaction">
    <interactant intactId="EBI-529518">
        <id>Q86VP1</id>
    </interactant>
    <interactant intactId="EBI-739909">
        <id>Q969R5</id>
        <label>L3MBTL2</label>
    </interactant>
    <organismsDiffer>false</organismsDiffer>
    <experiments>3</experiments>
</comment>
<comment type="interaction">
    <interactant intactId="EBI-529518">
        <id>Q86VP1</id>
    </interactant>
    <interactant intactId="EBI-740058">
        <id>O00214</id>
        <label>LGALS8</label>
    </interactant>
    <organismsDiffer>false</organismsDiffer>
    <experiments>5</experiments>
</comment>
<comment type="interaction">
    <interactant intactId="EBI-529518">
        <id>Q86VP1</id>
    </interactant>
    <interactant intactId="EBI-12069522">
        <id>O00214-2</id>
        <label>LGALS8</label>
    </interactant>
    <organismsDiffer>false</organismsDiffer>
    <experiments>3</experiments>
</comment>
<comment type="interaction">
    <interactant intactId="EBI-529518">
        <id>Q86VP1</id>
    </interactant>
    <interactant intactId="EBI-725647">
        <id>Q99732</id>
        <label>LITAF</label>
    </interactant>
    <organismsDiffer>false</organismsDiffer>
    <experiments>3</experiments>
</comment>
<comment type="interaction">
    <interactant intactId="EBI-529518">
        <id>Q86VP1</id>
    </interactant>
    <interactant intactId="EBI-742259">
        <id>Q8TAP4</id>
        <label>LMO3</label>
    </interactant>
    <organismsDiffer>false</organismsDiffer>
    <experiments>3</experiments>
</comment>
<comment type="interaction">
    <interactant intactId="EBI-529518">
        <id>Q86VP1</id>
    </interactant>
    <interactant intactId="EBI-739832">
        <id>Q8TBB1</id>
        <label>LNX1</label>
    </interactant>
    <organismsDiffer>false</organismsDiffer>
    <experiments>3</experiments>
</comment>
<comment type="interaction">
    <interactant intactId="EBI-529518">
        <id>Q86VP1</id>
    </interactant>
    <interactant intactId="EBI-9057780">
        <id>Q96KN1</id>
        <label>LRATD2</label>
    </interactant>
    <organismsDiffer>false</organismsDiffer>
    <experiments>3</experiments>
</comment>
<comment type="interaction">
    <interactant intactId="EBI-529518">
        <id>Q86VP1</id>
    </interactant>
    <interactant intactId="EBI-2603996">
        <id>Q9BXW4</id>
        <label>MAP1LC3C</label>
    </interactant>
    <organismsDiffer>false</organismsDiffer>
    <experiments>3</experiments>
</comment>
<comment type="interaction">
    <interactant intactId="EBI-529518">
        <id>Q86VP1</id>
    </interactant>
    <interactant intactId="EBI-5453723">
        <id>Q9Y3B7</id>
        <label>MRPL11</label>
    </interactant>
    <organismsDiffer>false</organismsDiffer>
    <experiments>6</experiments>
</comment>
<comment type="interaction">
    <interactant intactId="EBI-529518">
        <id>Q86VP1</id>
    </interactant>
    <interactant intactId="EBI-2513715">
        <id>Q96EL3</id>
        <label>MRPL53</label>
    </interactant>
    <organismsDiffer>false</organismsDiffer>
    <experiments>3</experiments>
</comment>
<comment type="interaction">
    <interactant intactId="EBI-529518">
        <id>Q86VP1</id>
    </interactant>
    <interactant intactId="EBI-10315485">
        <id>Q9NWW6</id>
        <label>NMRK1</label>
    </interactant>
    <organismsDiffer>false</organismsDiffer>
    <experiments>6</experiments>
</comment>
<comment type="interaction">
    <interactant intactId="EBI-529518">
        <id>Q86VP1</id>
    </interactant>
    <interactant intactId="EBI-741158">
        <id>Q96HA8</id>
        <label>NTAQ1</label>
    </interactant>
    <organismsDiffer>false</organismsDiffer>
    <experiments>3</experiments>
</comment>
<comment type="interaction">
    <interactant intactId="EBI-529518">
        <id>Q86VP1</id>
    </interactant>
    <interactant intactId="EBI-14066006">
        <id>Q4G0R1</id>
        <label>PIBF1</label>
    </interactant>
    <organismsDiffer>false</organismsDiffer>
    <experiments>3</experiments>
</comment>
<comment type="interaction">
    <interactant intactId="EBI-529518">
        <id>Q86VP1</id>
    </interactant>
    <interactant intactId="EBI-373552">
        <id>Q96CS7</id>
        <label>PLEKHB2</label>
    </interactant>
    <organismsDiffer>false</organismsDiffer>
    <experiments>3</experiments>
</comment>
<comment type="interaction">
    <interactant intactId="EBI-529518">
        <id>Q86VP1</id>
    </interactant>
    <interactant intactId="EBI-10241513">
        <id>Q494U1</id>
        <label>PLEKHN1</label>
    </interactant>
    <organismsDiffer>false</organismsDiffer>
    <experiments>4</experiments>
</comment>
<comment type="interaction">
    <interactant intactId="EBI-529518">
        <id>Q86VP1</id>
    </interactant>
    <interactant intactId="EBI-12014286">
        <id>Q494U1-3</id>
        <label>PLEKHN1</label>
    </interactant>
    <organismsDiffer>false</organismsDiffer>
    <experiments>3</experiments>
</comment>
<comment type="interaction">
    <interactant intactId="EBI-529518">
        <id>Q86VP1</id>
    </interactant>
    <interactant intactId="EBI-1055079">
        <id>O15160</id>
        <label>POLR1C</label>
    </interactant>
    <organismsDiffer>false</organismsDiffer>
    <experiments>3</experiments>
</comment>
<comment type="interaction">
    <interactant intactId="EBI-529518">
        <id>Q86VP1</id>
    </interactant>
    <interactant intactId="EBI-722247">
        <id>Q9NP72</id>
        <label>RAB18</label>
    </interactant>
    <organismsDiffer>false</organismsDiffer>
    <experiments>3</experiments>
</comment>
<comment type="interaction">
    <interactant intactId="EBI-529518">
        <id>Q86VP1</id>
    </interactant>
    <interactant intactId="EBI-2339393">
        <id>Q9NS91</id>
        <label>RAD18</label>
    </interactant>
    <organismsDiffer>false</organismsDiffer>
    <experiments>6</experiments>
</comment>
<comment type="interaction">
    <interactant intactId="EBI-529518">
        <id>Q86VP1</id>
    </interactant>
    <interactant intactId="EBI-954531">
        <id>P54727</id>
        <label>RAD23B</label>
    </interactant>
    <organismsDiffer>false</organismsDiffer>
    <experiments>3</experiments>
</comment>
<comment type="interaction">
    <interactant intactId="EBI-529518">
        <id>Q86VP1</id>
    </interactant>
    <interactant intactId="EBI-749285">
        <id>Q15311</id>
        <label>RALBP1</label>
    </interactant>
    <organismsDiffer>false</organismsDiffer>
    <experiments>3</experiments>
</comment>
<comment type="interaction">
    <interactant intactId="EBI-529518">
        <id>Q86VP1</id>
    </interactant>
    <interactant intactId="EBI-396669">
        <id>Q9Y3C5</id>
        <label>RNF11</label>
    </interactant>
    <organismsDiffer>false</organismsDiffer>
    <experiments>2</experiments>
</comment>
<comment type="interaction">
    <interactant intactId="EBI-529518">
        <id>Q86VP1</id>
    </interactant>
    <interactant intactId="EBI-748391">
        <id>Q9BWG6</id>
        <label>SCNM1</label>
    </interactant>
    <organismsDiffer>false</organismsDiffer>
    <experiments>3</experiments>
</comment>
<comment type="interaction">
    <interactant intactId="EBI-529518">
        <id>Q86VP1</id>
    </interactant>
    <interactant intactId="EBI-2210673">
        <id>Q16385</id>
        <label>SSX2B</label>
    </interactant>
    <organismsDiffer>false</organismsDiffer>
    <experiments>3</experiments>
</comment>
<comment type="interaction">
    <interactant intactId="EBI-529518">
        <id>Q86VP1</id>
    </interactant>
    <interactant intactId="EBI-465487">
        <id>Q9Y3M8</id>
        <label>STARD13</label>
    </interactant>
    <organismsDiffer>false</organismsDiffer>
    <experiments>2</experiments>
</comment>
<comment type="interaction">
    <interactant intactId="EBI-529518">
        <id>Q86VP1</id>
    </interactant>
    <interactant intactId="EBI-1048247">
        <id>Q8TC07</id>
        <label>TBC1D15</label>
    </interactant>
    <organismsDiffer>false</organismsDiffer>
    <experiments>3</experiments>
</comment>
<comment type="interaction">
    <interactant intactId="EBI-529518">
        <id>Q86VP1</id>
    </interactant>
    <interactant intactId="EBI-11974855">
        <id>Q9Y4C2-2</id>
        <label>TCAF1</label>
    </interactant>
    <organismsDiffer>false</organismsDiffer>
    <experiments>3</experiments>
</comment>
<comment type="interaction">
    <interactant intactId="EBI-529518">
        <id>Q86VP1</id>
    </interactant>
    <interactant intactId="EBI-710310">
        <id>Q15560</id>
        <label>TCEA2</label>
    </interactant>
    <organismsDiffer>false</organismsDiffer>
    <experiments>3</experiments>
</comment>
<comment type="interaction">
    <interactant intactId="EBI-529518">
        <id>Q86VP1</id>
    </interactant>
    <interactant intactId="EBI-749995">
        <id>P56279</id>
        <label>TCL1A</label>
    </interactant>
    <organismsDiffer>false</organismsDiffer>
    <experiments>3</experiments>
</comment>
<comment type="interaction">
    <interactant intactId="EBI-529518">
        <id>Q86VP1</id>
    </interactant>
    <interactant intactId="EBI-527670">
        <id>P21580</id>
        <label>TNFAIP3</label>
    </interactant>
    <organismsDiffer>false</organismsDiffer>
    <experiments>6</experiments>
</comment>
<comment type="interaction">
    <interactant intactId="EBI-529518">
        <id>Q86VP1</id>
    </interactant>
    <interactant intactId="EBI-357849">
        <id>Q15025</id>
        <label>TNIP1</label>
    </interactant>
    <organismsDiffer>false</organismsDiffer>
    <experiments>8</experiments>
</comment>
<comment type="interaction">
    <interactant intactId="EBI-529518">
        <id>Q86VP1</id>
    </interactant>
    <interactant intactId="EBI-2509913">
        <id>Q96KP6</id>
        <label>TNIP3</label>
    </interactant>
    <organismsDiffer>false</organismsDiffer>
    <experiments>7</experiments>
</comment>
<comment type="interaction">
    <interactant intactId="EBI-529518">
        <id>Q86VP1</id>
    </interactant>
    <interactant intactId="EBI-3650647">
        <id>Q9BUZ4</id>
        <label>TRAF4</label>
    </interactant>
    <organismsDiffer>false</organismsDiffer>
    <experiments>3</experiments>
</comment>
<comment type="interaction">
    <interactant intactId="EBI-529518">
        <id>Q86VP1</id>
    </interactant>
    <interactant intactId="EBI-359276">
        <id>Q9Y4K3</id>
        <label>TRAF6</label>
    </interactant>
    <organismsDiffer>false</organismsDiffer>
    <experiments>8</experiments>
</comment>
<comment type="interaction">
    <interactant intactId="EBI-529518">
        <id>Q86VP1</id>
    </interactant>
    <interactant intactId="EBI-8451480">
        <id>O75865-2</id>
        <label>TRAPPC6A</label>
    </interactant>
    <organismsDiffer>false</organismsDiffer>
    <experiments>3</experiments>
</comment>
<comment type="interaction">
    <interactant intactId="EBI-529518">
        <id>Q86VP1</id>
    </interactant>
    <interactant intactId="EBI-11993364">
        <id>Q9H8W5-2</id>
        <label>TRIM45</label>
    </interactant>
    <organismsDiffer>false</organismsDiffer>
    <experiments>3</experiments>
</comment>
<comment type="interaction">
    <interactant intactId="EBI-529518">
        <id>Q86VP1</id>
    </interactant>
    <interactant intactId="EBI-2559818">
        <id>Q8NCE0</id>
        <label>TSEN2</label>
    </interactant>
    <organismsDiffer>false</organismsDiffer>
    <experiments>3</experiments>
</comment>
<comment type="interaction">
    <interactant intactId="EBI-529518">
        <id>Q86VP1</id>
    </interactant>
    <interactant intactId="EBI-346882">
        <id>Q99816</id>
        <label>TSG101</label>
    </interactant>
    <organismsDiffer>false</organismsDiffer>
    <experiments>6</experiments>
</comment>
<comment type="interaction">
    <interactant intactId="EBI-529518">
        <id>Q86VP1</id>
    </interactant>
    <interactant intactId="EBI-9053916">
        <id>Q63HK5</id>
        <label>TSHZ3</label>
    </interactant>
    <organismsDiffer>false</organismsDiffer>
    <experiments>3</experiments>
</comment>
<comment type="interaction">
    <interactant intactId="EBI-529518">
        <id>Q86VP1</id>
    </interactant>
    <interactant intactId="EBI-357304">
        <id>P62987</id>
        <label>UBA52</label>
    </interactant>
    <organismsDiffer>false</organismsDiffer>
    <experiments>3</experiments>
</comment>
<comment type="interaction">
    <interactant intactId="EBI-529518">
        <id>Q86VP1</id>
    </interactant>
    <interactant intactId="EBI-7353612">
        <id>P57075-2</id>
        <label>UBASH3A</label>
    </interactant>
    <organismsDiffer>false</organismsDiffer>
    <experiments>3</experiments>
</comment>
<comment type="interaction">
    <interactant intactId="EBI-529518">
        <id>Q86VP1</id>
    </interactant>
    <interactant intactId="EBI-413034">
        <id>P0CG47</id>
        <label>UBB</label>
    </interactant>
    <organismsDiffer>false</organismsDiffer>
    <experiments>3</experiments>
</comment>
<comment type="interaction">
    <interactant intactId="EBI-529518">
        <id>Q86VP1</id>
    </interactant>
    <interactant intactId="EBI-3390054">
        <id>P0CG48</id>
        <label>UBC</label>
    </interactant>
    <organismsDiffer>false</organismsDiffer>
    <experiments>8</experiments>
</comment>
<comment type="interaction">
    <interactant intactId="EBI-529518">
        <id>Q86VP1</id>
    </interactant>
    <interactant intactId="EBI-17208936">
        <id>P0CB47</id>
        <label>UBTFL1</label>
    </interactant>
    <organismsDiffer>false</organismsDiffer>
    <experiments>3</experiments>
</comment>
<comment type="interaction">
    <interactant intactId="EBI-529518">
        <id>Q86VP1</id>
    </interactant>
    <interactant intactId="EBI-743272">
        <id>O75604</id>
        <label>USP2</label>
    </interactant>
    <organismsDiffer>false</organismsDiffer>
    <experiments>3</experiments>
</comment>
<comment type="interaction">
    <interactant intactId="EBI-529518">
        <id>Q86VP1</id>
    </interactant>
    <interactant intactId="EBI-740232">
        <id>Q9NWS9-2</id>
        <label>ZNF446</label>
    </interactant>
    <organismsDiffer>false</organismsDiffer>
    <experiments>3</experiments>
</comment>
<comment type="interaction">
    <interactant intactId="EBI-529518">
        <id>Q86VP1</id>
    </interactant>
    <interactant intactId="EBI-747182">
        <id>Q8WU02</id>
    </interactant>
    <organismsDiffer>false</organismsDiffer>
    <experiments>3</experiments>
</comment>
<comment type="subcellular location">
    <subcellularLocation>
        <location evidence="21">Cytoplasm</location>
    </subcellularLocation>
    <subcellularLocation>
        <location evidence="17">Mitochondrion</location>
    </subcellularLocation>
    <subcellularLocation>
        <location evidence="23 25">Preautophagosomal structure</location>
    </subcellularLocation>
    <subcellularLocation>
        <location evidence="15">Cytoplasmic vesicle</location>
        <location evidence="15">Autophagosome</location>
    </subcellularLocation>
</comment>
<comment type="alternative products">
    <event type="alternative splicing"/>
    <isoform>
        <id>Q86VP1-1</id>
        <name>1</name>
        <sequence type="displayed"/>
    </isoform>
    <isoform>
        <id>Q86VP1-2</id>
        <name>2</name>
        <name>TXBP151-L</name>
        <sequence type="described" ref="VSP_018355"/>
    </isoform>
    <isoform>
        <id>Q86VP1-3</id>
        <name>3</name>
        <name>TXBP151-S</name>
        <sequence type="described" ref="VSP_018354 VSP_018355"/>
    </isoform>
    <isoform>
        <id>Q86VP1-4</id>
        <name>4</name>
        <sequence type="described" ref="VSP_045921 VSP_018355"/>
    </isoform>
</comment>
<comment type="tissue specificity">
    <text>Expressed in all tissues tested.</text>
</comment>
<comment type="domain">
    <text evidence="14">The C-terminal UBZ-type zinc fingers function as ubiquitin-binding domains.</text>
</comment>
<comment type="PTM">
    <text evidence="12">Phosphorylated in the C-terminal region by CHUK/IKKA leading to NF-kappa-B signaling down-regulation.</text>
</comment>
<comment type="sequence caution" evidence="31">
    <conflict type="erroneous gene model prediction">
        <sequence resource="EMBL-CDS" id="AAC13359"/>
    </conflict>
</comment>
<reference key="1">
    <citation type="journal article" date="1999" name="Oncogene">
        <title>The zinc finger protein A20 interacts with a novel anti-apoptotic protein which is cleaved by specific caspases.</title>
        <authorList>
            <person name="de Valck D."/>
            <person name="Jin D.-Y."/>
            <person name="Heyninck K."/>
            <person name="van de Craen M."/>
            <person name="Contreras R."/>
            <person name="Fiers W."/>
            <person name="Jeang K.-T."/>
            <person name="Beyaert R."/>
        </authorList>
    </citation>
    <scope>NUCLEOTIDE SEQUENCE [MRNA] (ISOFORM 2)</scope>
    <scope>FUNCTION</scope>
    <scope>INTERACTION WITH TNFAIP3</scope>
    <scope>INTERACTION WITH HTLV-1 PROTEIN TAX (MICROBIAL INFECTION)</scope>
    <scope>ALTERNATIVE SPLICING (ISOFORM 3)</scope>
    <source>
        <tissue>Cervix carcinoma</tissue>
    </source>
</reference>
<reference key="2">
    <citation type="journal article" date="2000" name="Proc. Natl. Acad. Sci. U.S.A.">
        <title>T6BP, a TRAF6-interacting protein involved in IL-1 signaling.</title>
        <authorList>
            <person name="Ling L."/>
            <person name="Goeddel D.V."/>
        </authorList>
    </citation>
    <scope>NUCLEOTIDE SEQUENCE [MRNA] (ISOFORM 2)</scope>
    <scope>FUNCTION</scope>
    <scope>INTERACTION WITH TRAF6</scope>
    <scope>SUBUNIT</scope>
</reference>
<reference key="3">
    <citation type="journal article" date="2001" name="Genome Res.">
        <title>Towards a catalog of human genes and proteins: sequencing and analysis of 500 novel complete protein coding human cDNAs.</title>
        <authorList>
            <person name="Wiemann S."/>
            <person name="Weil B."/>
            <person name="Wellenreuther R."/>
            <person name="Gassenhuber J."/>
            <person name="Glassl S."/>
            <person name="Ansorge W."/>
            <person name="Boecher M."/>
            <person name="Bloecker H."/>
            <person name="Bauersachs S."/>
            <person name="Blum H."/>
            <person name="Lauber J."/>
            <person name="Duesterhoeft A."/>
            <person name="Beyer A."/>
            <person name="Koehrer K."/>
            <person name="Strack N."/>
            <person name="Mewes H.-W."/>
            <person name="Ottenwaelder B."/>
            <person name="Obermaier B."/>
            <person name="Tampe J."/>
            <person name="Heubner D."/>
            <person name="Wambutt R."/>
            <person name="Korn B."/>
            <person name="Klein M."/>
            <person name="Poustka A."/>
        </authorList>
    </citation>
    <scope>NUCLEOTIDE SEQUENCE [LARGE SCALE MRNA] (ISOFORM 1)</scope>
    <source>
        <tissue>Amygdala</tissue>
    </source>
</reference>
<reference key="4">
    <citation type="submission" date="1998-09" db="EMBL/GenBank/DDBJ databases">
        <title>Functional prediction of the coding sequences of 50 new genes deduced by analysis of cDNA clones from human fetal liver.</title>
        <authorList>
            <person name="Yu Y."/>
            <person name="Zhang C."/>
            <person name="Luo L."/>
            <person name="Ouyang S."/>
            <person name="Zhang S."/>
            <person name="Li W."/>
            <person name="Wu J."/>
            <person name="Zhou S."/>
            <person name="Liu M."/>
            <person name="He F."/>
        </authorList>
    </citation>
    <scope>NUCLEOTIDE SEQUENCE [LARGE SCALE MRNA] (ISOFORM 2)</scope>
    <source>
        <tissue>Fetal liver</tissue>
    </source>
</reference>
<reference key="5">
    <citation type="journal article" date="2004" name="Nat. Genet.">
        <title>Complete sequencing and characterization of 21,243 full-length human cDNAs.</title>
        <authorList>
            <person name="Ota T."/>
            <person name="Suzuki Y."/>
            <person name="Nishikawa T."/>
            <person name="Otsuki T."/>
            <person name="Sugiyama T."/>
            <person name="Irie R."/>
            <person name="Wakamatsu A."/>
            <person name="Hayashi K."/>
            <person name="Sato H."/>
            <person name="Nagai K."/>
            <person name="Kimura K."/>
            <person name="Makita H."/>
            <person name="Sekine M."/>
            <person name="Obayashi M."/>
            <person name="Nishi T."/>
            <person name="Shibahara T."/>
            <person name="Tanaka T."/>
            <person name="Ishii S."/>
            <person name="Yamamoto J."/>
            <person name="Saito K."/>
            <person name="Kawai Y."/>
            <person name="Isono Y."/>
            <person name="Nakamura Y."/>
            <person name="Nagahari K."/>
            <person name="Murakami K."/>
            <person name="Yasuda T."/>
            <person name="Iwayanagi T."/>
            <person name="Wagatsuma M."/>
            <person name="Shiratori A."/>
            <person name="Sudo H."/>
            <person name="Hosoiri T."/>
            <person name="Kaku Y."/>
            <person name="Kodaira H."/>
            <person name="Kondo H."/>
            <person name="Sugawara M."/>
            <person name="Takahashi M."/>
            <person name="Kanda K."/>
            <person name="Yokoi T."/>
            <person name="Furuya T."/>
            <person name="Kikkawa E."/>
            <person name="Omura Y."/>
            <person name="Abe K."/>
            <person name="Kamihara K."/>
            <person name="Katsuta N."/>
            <person name="Sato K."/>
            <person name="Tanikawa M."/>
            <person name="Yamazaki M."/>
            <person name="Ninomiya K."/>
            <person name="Ishibashi T."/>
            <person name="Yamashita H."/>
            <person name="Murakawa K."/>
            <person name="Fujimori K."/>
            <person name="Tanai H."/>
            <person name="Kimata M."/>
            <person name="Watanabe M."/>
            <person name="Hiraoka S."/>
            <person name="Chiba Y."/>
            <person name="Ishida S."/>
            <person name="Ono Y."/>
            <person name="Takiguchi S."/>
            <person name="Watanabe S."/>
            <person name="Yosida M."/>
            <person name="Hotuta T."/>
            <person name="Kusano J."/>
            <person name="Kanehori K."/>
            <person name="Takahashi-Fujii A."/>
            <person name="Hara H."/>
            <person name="Tanase T.-O."/>
            <person name="Nomura Y."/>
            <person name="Togiya S."/>
            <person name="Komai F."/>
            <person name="Hara R."/>
            <person name="Takeuchi K."/>
            <person name="Arita M."/>
            <person name="Imose N."/>
            <person name="Musashino K."/>
            <person name="Yuuki H."/>
            <person name="Oshima A."/>
            <person name="Sasaki N."/>
            <person name="Aotsuka S."/>
            <person name="Yoshikawa Y."/>
            <person name="Matsunawa H."/>
            <person name="Ichihara T."/>
            <person name="Shiohata N."/>
            <person name="Sano S."/>
            <person name="Moriya S."/>
            <person name="Momiyama H."/>
            <person name="Satoh N."/>
            <person name="Takami S."/>
            <person name="Terashima Y."/>
            <person name="Suzuki O."/>
            <person name="Nakagawa S."/>
            <person name="Senoh A."/>
            <person name="Mizoguchi H."/>
            <person name="Goto Y."/>
            <person name="Shimizu F."/>
            <person name="Wakebe H."/>
            <person name="Hishigaki H."/>
            <person name="Watanabe T."/>
            <person name="Sugiyama A."/>
            <person name="Takemoto M."/>
            <person name="Kawakami B."/>
            <person name="Yamazaki M."/>
            <person name="Watanabe K."/>
            <person name="Kumagai A."/>
            <person name="Itakura S."/>
            <person name="Fukuzumi Y."/>
            <person name="Fujimori Y."/>
            <person name="Komiyama M."/>
            <person name="Tashiro H."/>
            <person name="Tanigami A."/>
            <person name="Fujiwara T."/>
            <person name="Ono T."/>
            <person name="Yamada K."/>
            <person name="Fujii Y."/>
            <person name="Ozaki K."/>
            <person name="Hirao M."/>
            <person name="Ohmori Y."/>
            <person name="Kawabata A."/>
            <person name="Hikiji T."/>
            <person name="Kobatake N."/>
            <person name="Inagaki H."/>
            <person name="Ikema Y."/>
            <person name="Okamoto S."/>
            <person name="Okitani R."/>
            <person name="Kawakami T."/>
            <person name="Noguchi S."/>
            <person name="Itoh T."/>
            <person name="Shigeta K."/>
            <person name="Senba T."/>
            <person name="Matsumura K."/>
            <person name="Nakajima Y."/>
            <person name="Mizuno T."/>
            <person name="Morinaga M."/>
            <person name="Sasaki M."/>
            <person name="Togashi T."/>
            <person name="Oyama M."/>
            <person name="Hata H."/>
            <person name="Watanabe M."/>
            <person name="Komatsu T."/>
            <person name="Mizushima-Sugano J."/>
            <person name="Satoh T."/>
            <person name="Shirai Y."/>
            <person name="Takahashi Y."/>
            <person name="Nakagawa K."/>
            <person name="Okumura K."/>
            <person name="Nagase T."/>
            <person name="Nomura N."/>
            <person name="Kikuchi H."/>
            <person name="Masuho Y."/>
            <person name="Yamashita R."/>
            <person name="Nakai K."/>
            <person name="Yada T."/>
            <person name="Nakamura Y."/>
            <person name="Ohara O."/>
            <person name="Isogai T."/>
            <person name="Sugano S."/>
        </authorList>
    </citation>
    <scope>NUCLEOTIDE SEQUENCE [LARGE SCALE MRNA] (ISOFORMS 1 AND 4)</scope>
    <source>
        <tissue>Testis</tissue>
        <tissue>Tongue</tissue>
    </source>
</reference>
<reference key="6">
    <citation type="submission" date="2004-06" db="EMBL/GenBank/DDBJ databases">
        <title>Cloning of human full open reading frames in Gateway(TM) system entry vector (pDONR201).</title>
        <authorList>
            <person name="Ebert L."/>
            <person name="Schick M."/>
            <person name="Neubert P."/>
            <person name="Schatten R."/>
            <person name="Henze S."/>
            <person name="Korn B."/>
        </authorList>
    </citation>
    <scope>NUCLEOTIDE SEQUENCE [LARGE SCALE MRNA] (ISOFORMS 1 AND 2)</scope>
</reference>
<reference key="7">
    <citation type="journal article" date="2003" name="Nature">
        <title>The DNA sequence of human chromosome 7.</title>
        <authorList>
            <person name="Hillier L.W."/>
            <person name="Fulton R.S."/>
            <person name="Fulton L.A."/>
            <person name="Graves T.A."/>
            <person name="Pepin K.H."/>
            <person name="Wagner-McPherson C."/>
            <person name="Layman D."/>
            <person name="Maas J."/>
            <person name="Jaeger S."/>
            <person name="Walker R."/>
            <person name="Wylie K."/>
            <person name="Sekhon M."/>
            <person name="Becker M.C."/>
            <person name="O'Laughlin M.D."/>
            <person name="Schaller M.E."/>
            <person name="Fewell G.A."/>
            <person name="Delehaunty K.D."/>
            <person name="Miner T.L."/>
            <person name="Nash W.E."/>
            <person name="Cordes M."/>
            <person name="Du H."/>
            <person name="Sun H."/>
            <person name="Edwards J."/>
            <person name="Bradshaw-Cordum H."/>
            <person name="Ali J."/>
            <person name="Andrews S."/>
            <person name="Isak A."/>
            <person name="Vanbrunt A."/>
            <person name="Nguyen C."/>
            <person name="Du F."/>
            <person name="Lamar B."/>
            <person name="Courtney L."/>
            <person name="Kalicki J."/>
            <person name="Ozersky P."/>
            <person name="Bielicki L."/>
            <person name="Scott K."/>
            <person name="Holmes A."/>
            <person name="Harkins R."/>
            <person name="Harris A."/>
            <person name="Strong C.M."/>
            <person name="Hou S."/>
            <person name="Tomlinson C."/>
            <person name="Dauphin-Kohlberg S."/>
            <person name="Kozlowicz-Reilly A."/>
            <person name="Leonard S."/>
            <person name="Rohlfing T."/>
            <person name="Rock S.M."/>
            <person name="Tin-Wollam A.-M."/>
            <person name="Abbott A."/>
            <person name="Minx P."/>
            <person name="Maupin R."/>
            <person name="Strowmatt C."/>
            <person name="Latreille P."/>
            <person name="Miller N."/>
            <person name="Johnson D."/>
            <person name="Murray J."/>
            <person name="Woessner J.P."/>
            <person name="Wendl M.C."/>
            <person name="Yang S.-P."/>
            <person name="Schultz B.R."/>
            <person name="Wallis J.W."/>
            <person name="Spieth J."/>
            <person name="Bieri T.A."/>
            <person name="Nelson J.O."/>
            <person name="Berkowicz N."/>
            <person name="Wohldmann P.E."/>
            <person name="Cook L.L."/>
            <person name="Hickenbotham M.T."/>
            <person name="Eldred J."/>
            <person name="Williams D."/>
            <person name="Bedell J.A."/>
            <person name="Mardis E.R."/>
            <person name="Clifton S.W."/>
            <person name="Chissoe S.L."/>
            <person name="Marra M.A."/>
            <person name="Raymond C."/>
            <person name="Haugen E."/>
            <person name="Gillett W."/>
            <person name="Zhou Y."/>
            <person name="James R."/>
            <person name="Phelps K."/>
            <person name="Iadanoto S."/>
            <person name="Bubb K."/>
            <person name="Simms E."/>
            <person name="Levy R."/>
            <person name="Clendenning J."/>
            <person name="Kaul R."/>
            <person name="Kent W.J."/>
            <person name="Furey T.S."/>
            <person name="Baertsch R.A."/>
            <person name="Brent M.R."/>
            <person name="Keibler E."/>
            <person name="Flicek P."/>
            <person name="Bork P."/>
            <person name="Suyama M."/>
            <person name="Bailey J.A."/>
            <person name="Portnoy M.E."/>
            <person name="Torrents D."/>
            <person name="Chinwalla A.T."/>
            <person name="Gish W.R."/>
            <person name="Eddy S.R."/>
            <person name="McPherson J.D."/>
            <person name="Olson M.V."/>
            <person name="Eichler E.E."/>
            <person name="Green E.D."/>
            <person name="Waterston R.H."/>
            <person name="Wilson R.K."/>
        </authorList>
    </citation>
    <scope>NUCLEOTIDE SEQUENCE [LARGE SCALE GENOMIC DNA]</scope>
</reference>
<reference key="8">
    <citation type="journal article" date="2003" name="Science">
        <title>Human chromosome 7: DNA sequence and biology.</title>
        <authorList>
            <person name="Scherer S.W."/>
            <person name="Cheung J."/>
            <person name="MacDonald J.R."/>
            <person name="Osborne L.R."/>
            <person name="Nakabayashi K."/>
            <person name="Herbrick J.-A."/>
            <person name="Carson A.R."/>
            <person name="Parker-Katiraee L."/>
            <person name="Skaug J."/>
            <person name="Khaja R."/>
            <person name="Zhang J."/>
            <person name="Hudek A.K."/>
            <person name="Li M."/>
            <person name="Haddad M."/>
            <person name="Duggan G.E."/>
            <person name="Fernandez B.A."/>
            <person name="Kanematsu E."/>
            <person name="Gentles S."/>
            <person name="Christopoulos C.C."/>
            <person name="Choufani S."/>
            <person name="Kwasnicka D."/>
            <person name="Zheng X.H."/>
            <person name="Lai Z."/>
            <person name="Nusskern D.R."/>
            <person name="Zhang Q."/>
            <person name="Gu Z."/>
            <person name="Lu F."/>
            <person name="Zeesman S."/>
            <person name="Nowaczyk M.J."/>
            <person name="Teshima I."/>
            <person name="Chitayat D."/>
            <person name="Shuman C."/>
            <person name="Weksberg R."/>
            <person name="Zackai E.H."/>
            <person name="Grebe T.A."/>
            <person name="Cox S.R."/>
            <person name="Kirkpatrick S.J."/>
            <person name="Rahman N."/>
            <person name="Friedman J.M."/>
            <person name="Heng H.H.Q."/>
            <person name="Pelicci P.G."/>
            <person name="Lo-Coco F."/>
            <person name="Belloni E."/>
            <person name="Shaffer L.G."/>
            <person name="Pober B."/>
            <person name="Morton C.C."/>
            <person name="Gusella J.F."/>
            <person name="Bruns G.A.P."/>
            <person name="Korf B.R."/>
            <person name="Quade B.J."/>
            <person name="Ligon A.H."/>
            <person name="Ferguson H."/>
            <person name="Higgins A.W."/>
            <person name="Leach N.T."/>
            <person name="Herrick S.R."/>
            <person name="Lemyre E."/>
            <person name="Farra C.G."/>
            <person name="Kim H.-G."/>
            <person name="Summers A.M."/>
            <person name="Gripp K.W."/>
            <person name="Roberts W."/>
            <person name="Szatmari P."/>
            <person name="Winsor E.J.T."/>
            <person name="Grzeschik K.-H."/>
            <person name="Teebi A."/>
            <person name="Minassian B.A."/>
            <person name="Kere J."/>
            <person name="Armengol L."/>
            <person name="Pujana M.A."/>
            <person name="Estivill X."/>
            <person name="Wilson M.D."/>
            <person name="Koop B.F."/>
            <person name="Tosi S."/>
            <person name="Moore G.E."/>
            <person name="Boright A.P."/>
            <person name="Zlotorynski E."/>
            <person name="Kerem B."/>
            <person name="Kroisel P.M."/>
            <person name="Petek E."/>
            <person name="Oscier D.G."/>
            <person name="Mould S.J."/>
            <person name="Doehner H."/>
            <person name="Doehner K."/>
            <person name="Rommens J.M."/>
            <person name="Vincent J.B."/>
            <person name="Venter J.C."/>
            <person name="Li P.W."/>
            <person name="Mural R.J."/>
            <person name="Adams M.D."/>
            <person name="Tsui L.-C."/>
        </authorList>
    </citation>
    <scope>NUCLEOTIDE SEQUENCE [LARGE SCALE GENOMIC DNA]</scope>
</reference>
<reference key="9">
    <citation type="submission" date="2005-07" db="EMBL/GenBank/DDBJ databases">
        <authorList>
            <person name="Mural R.J."/>
            <person name="Istrail S."/>
            <person name="Sutton G."/>
            <person name="Florea L."/>
            <person name="Halpern A.L."/>
            <person name="Mobarry C.M."/>
            <person name="Lippert R."/>
            <person name="Walenz B."/>
            <person name="Shatkay H."/>
            <person name="Dew I."/>
            <person name="Miller J.R."/>
            <person name="Flanigan M.J."/>
            <person name="Edwards N.J."/>
            <person name="Bolanos R."/>
            <person name="Fasulo D."/>
            <person name="Halldorsson B.V."/>
            <person name="Hannenhalli S."/>
            <person name="Turner R."/>
            <person name="Yooseph S."/>
            <person name="Lu F."/>
            <person name="Nusskern D.R."/>
            <person name="Shue B.C."/>
            <person name="Zheng X.H."/>
            <person name="Zhong F."/>
            <person name="Delcher A.L."/>
            <person name="Huson D.H."/>
            <person name="Kravitz S.A."/>
            <person name="Mouchard L."/>
            <person name="Reinert K."/>
            <person name="Remington K.A."/>
            <person name="Clark A.G."/>
            <person name="Waterman M.S."/>
            <person name="Eichler E.E."/>
            <person name="Adams M.D."/>
            <person name="Hunkapiller M.W."/>
            <person name="Myers E.W."/>
            <person name="Venter J.C."/>
        </authorList>
    </citation>
    <scope>NUCLEOTIDE SEQUENCE [LARGE SCALE GENOMIC DNA]</scope>
</reference>
<reference key="10">
    <citation type="journal article" date="2004" name="Genome Res.">
        <title>The status, quality, and expansion of the NIH full-length cDNA project: the Mammalian Gene Collection (MGC).</title>
        <authorList>
            <consortium name="The MGC Project Team"/>
        </authorList>
    </citation>
    <scope>NUCLEOTIDE SEQUENCE [LARGE SCALE MRNA] (ISOFORM 1)</scope>
    <scope>VARIANT ILE-307</scope>
    <source>
        <tissue>Skin</tissue>
    </source>
</reference>
<reference key="11">
    <citation type="journal article" date="2004" name="Biochem. Biophys. Res. Commun.">
        <title>Chromosome 13q12 encoded Rho GTPase activating protein suppresses growth of breast carcinoma cells, and yeast two-hybrid screen shows its interaction with several proteins.</title>
        <authorList>
            <person name="Nagaraja G.M."/>
            <person name="Kandpal R.P."/>
        </authorList>
    </citation>
    <scope>INTERACTION WITH STARD13</scope>
</reference>
<reference key="12">
    <citation type="journal article" date="2004" name="J. Biol. Chem.">
        <title>Protein profile of tax-associated complexes.</title>
        <authorList>
            <person name="Wu K."/>
            <person name="Bottazzi M.E."/>
            <person name="de la Fuente C."/>
            <person name="Deng L."/>
            <person name="Gitlin S.D."/>
            <person name="Maddukuri A."/>
            <person name="Dadgar S."/>
            <person name="Li H."/>
            <person name="Vertes A."/>
            <person name="Pumfery A."/>
            <person name="Kashanchi F."/>
        </authorList>
    </citation>
    <scope>IDENTIFICATION BY MASS SPECTROMETRY</scope>
    <scope>INTERACTION WITH HTLV-1 PROTEIN TAX (MICROBIAL INFECTION)</scope>
</reference>
<reference key="13">
    <citation type="journal article" date="2007" name="EMBO J.">
        <title>Essential role for TAX1BP1 in the termination of TNF-alpha-, IL-1- and LPS-mediated NF-kappaB and JNK signaling.</title>
        <authorList>
            <person name="Shembade N."/>
            <person name="Harhaj N.S."/>
            <person name="Liebl D.J."/>
            <person name="Harhaj E.W."/>
        </authorList>
    </citation>
    <scope>FUNCTION</scope>
    <scope>INTERACTION WITH RIPK1 AND TRAF6</scope>
</reference>
<reference key="14">
    <citation type="journal article" date="2010" name="Sci. Signal.">
        <title>Quantitative phosphoproteomics reveals widespread full phosphorylation site occupancy during mitosis.</title>
        <authorList>
            <person name="Olsen J.V."/>
            <person name="Vermeulen M."/>
            <person name="Santamaria A."/>
            <person name="Kumar C."/>
            <person name="Miller M.L."/>
            <person name="Jensen L.J."/>
            <person name="Gnad F."/>
            <person name="Cox J."/>
            <person name="Jensen T.S."/>
            <person name="Nigg E.A."/>
            <person name="Brunak S."/>
            <person name="Mann M."/>
        </authorList>
    </citation>
    <scope>PHOSPHORYLATION [LARGE SCALE ANALYSIS] AT SER-225</scope>
    <scope>IDENTIFICATION BY MASS SPECTROMETRY [LARGE SCALE ANALYSIS]</scope>
    <source>
        <tissue>Cervix carcinoma</tissue>
    </source>
</reference>
<reference key="15">
    <citation type="journal article" date="2011" name="J. Biol. Chem.">
        <title>ABIN1 protein cooperates with TAX1BP1 and A20 proteins to inhibit antiviral signaling.</title>
        <authorList>
            <person name="Gao L."/>
            <person name="Coope H."/>
            <person name="Grant S."/>
            <person name="Ma A."/>
            <person name="Ley S.C."/>
            <person name="Harhaj E.W."/>
        </authorList>
    </citation>
    <scope>FUNCTION</scope>
    <scope>INTERACTION WITH TNIP1</scope>
</reference>
<reference key="16">
    <citation type="journal article" date="2013" name="J. Proteome Res.">
        <title>Toward a comprehensive characterization of a human cancer cell phosphoproteome.</title>
        <authorList>
            <person name="Zhou H."/>
            <person name="Di Palma S."/>
            <person name="Preisinger C."/>
            <person name="Peng M."/>
            <person name="Polat A.N."/>
            <person name="Heck A.J."/>
            <person name="Mohammed S."/>
        </authorList>
    </citation>
    <scope>PHOSPHORYLATION [LARGE SCALE ANALYSIS] AT SER-666</scope>
    <scope>IDENTIFICATION BY MASS SPECTROMETRY [LARGE SCALE ANALYSIS]</scope>
    <source>
        <tissue>Erythroleukemia</tissue>
    </source>
</reference>
<reference key="17">
    <citation type="journal article" date="2014" name="J. Proteomics">
        <title>An enzyme assisted RP-RPLC approach for in-depth analysis of human liver phosphoproteome.</title>
        <authorList>
            <person name="Bian Y."/>
            <person name="Song C."/>
            <person name="Cheng K."/>
            <person name="Dong M."/>
            <person name="Wang F."/>
            <person name="Huang J."/>
            <person name="Sun D."/>
            <person name="Wang L."/>
            <person name="Ye M."/>
            <person name="Zou H."/>
        </authorList>
    </citation>
    <scope>PHOSPHORYLATION [LARGE SCALE ANALYSIS] AT SER-138</scope>
    <scope>IDENTIFICATION BY MASS SPECTROMETRY [LARGE SCALE ANALYSIS]</scope>
    <source>
        <tissue>Liver</tissue>
    </source>
</reference>
<reference key="18">
    <citation type="journal article" date="2016" name="FEBS J.">
        <title>A novel mode of ubiquitin recognition by the ubiquitin-binding zinc finger domain of WRNIP1.</title>
        <authorList>
            <person name="Suzuki N."/>
            <person name="Rohaim A."/>
            <person name="Kato R."/>
            <person name="Dikic I."/>
            <person name="Wakatsuki S."/>
            <person name="Kawasaki M."/>
        </authorList>
    </citation>
    <scope>MUTAGENESIS OF GLN-771; GLU-774; ARG-775; VAL-777; GLN-778 AND PHE-781</scope>
</reference>
<reference key="19">
    <citation type="journal article" date="2017" name="Mol. Cell. Biol.">
        <title>TAX1BP1 Restrains Virus-Induced Apoptosis by Facilitating Itch-Mediated Degradation of the Mitochondrial Adaptor MAVS.</title>
        <authorList>
            <person name="Choi Y.B."/>
            <person name="Shembade N."/>
            <person name="Parvatiyar K."/>
            <person name="Balachandran S."/>
            <person name="Harhaj E.W."/>
        </authorList>
    </citation>
    <scope>FUNCTION</scope>
    <scope>INTERACTION WITH MAVS</scope>
    <scope>SUBCELLULAR LOCATION</scope>
</reference>
<reference key="20">
    <citation type="journal article" date="2017" name="PLoS Pathog.">
        <title>TRIM32-TAX1BP1-dependent selective autophagic degradation of TRIF negatively regulates TLR3/4-mediated innate immune responses.</title>
        <authorList>
            <person name="Yang Q."/>
            <person name="Liu T.T."/>
            <person name="Lin H."/>
            <person name="Zhang M."/>
            <person name="Wei J."/>
            <person name="Luo W.W."/>
            <person name="Hu Y.H."/>
            <person name="Zhong B."/>
            <person name="Hu M.M."/>
            <person name="Shu H.B."/>
        </authorList>
    </citation>
    <scope>FUNCTION</scope>
    <scope>INTERACTION WITH TICAM1 AND TRIM32</scope>
</reference>
<reference key="21">
    <citation type="journal article" date="2019" name="Viruses">
        <title>Autophagy Promotes Infectious Particle Production of Mopeia and Lassa Viruses.</title>
        <authorList>
            <person name="Baillet N."/>
            <person name="Krieger S."/>
            <person name="Journeaux A."/>
            <person name="Caro V."/>
            <person name="Tangy F."/>
            <person name="Vidalain P.O."/>
            <person name="Baize S."/>
        </authorList>
    </citation>
    <scope>FUNCTION</scope>
    <scope>INTERACTION WITH LASSA VIRUS AND MOPEIA VIRUS PROTEIN Z (MICROBIAL INFECTION)</scope>
    <scope>SUBCELLULAR LOCATION</scope>
</reference>
<reference key="22">
    <citation type="journal article" date="2020" name="EMBO J.">
        <title>Receptor-mediated clustering of FIP200 bypasses the role of LC3 lipidation in autophagy.</title>
        <authorList>
            <person name="Ohnstad A.E."/>
            <person name="Delgado J.M."/>
            <person name="North B.J."/>
            <person name="Nasa I."/>
            <person name="Kettenbach A.N."/>
            <person name="Schultz S.W."/>
            <person name="Shoemaker C.J."/>
        </authorList>
    </citation>
    <scope>FUNCTION</scope>
    <scope>INTERACTION WITH NBR1; RB1CC1 AND TBK1</scope>
    <scope>MUTAGENESIS OF ALA-114</scope>
    <scope>SUBCELLULAR LOCATION</scope>
</reference>
<reference key="23">
    <citation type="journal article" date="2021" name="Nat. Commun.">
        <title>Reconstitution defines the roles of p62, NBR1 and TAX1BP1 in ubiquitin condensate formation and autophagy initiation.</title>
        <authorList>
            <person name="Turco E."/>
            <person name="Savova A."/>
            <person name="Gere F."/>
            <person name="Ferrari L."/>
            <person name="Romanov J."/>
            <person name="Schuschnig M."/>
            <person name="Martens S."/>
        </authorList>
    </citation>
    <scope>FUNCTION</scope>
    <scope>SUBCELLULAR LOCATION</scope>
    <scope>INTERACTION WITH NBR1; RB1CC1 AND SQSTM1</scope>
</reference>
<reference key="24">
    <citation type="journal article" date="2021" name="J. Virol.">
        <title>Depletion of TAX1BP1 Amplifies Innate Immune Responses during Respiratory Syncytial Virus Infection.</title>
        <authorList>
            <person name="Descamps D."/>
            <person name="Peres de Oliveira A."/>
            <person name="Gonnin L."/>
            <person name="Madrieres S."/>
            <person name="Fix J."/>
            <person name="Drajac C."/>
            <person name="Marquant Q."/>
            <person name="Bouguyon E."/>
            <person name="Pietralunga V."/>
            <person name="Iha H."/>
            <person name="Morais Ventura A."/>
            <person name="Tangy F."/>
            <person name="Vidalain P.O."/>
            <person name="Eleouet J.F."/>
            <person name="Galloux M."/>
        </authorList>
    </citation>
    <scope>INTERACTION WITH RESPIRATORY SYNCYTIAL VIRUS PROTEIN N (MICROBIAL INFECTION)</scope>
</reference>
<reference key="25">
    <citation type="journal article" date="2014" name="J. Mol. Biol.">
        <title>The structure of TAX1BP1 UBZ1+2 provides insight into target specificity and adaptability.</title>
        <authorList>
            <person name="Ceregido M.A."/>
            <person name="Spinola Amilibia M."/>
            <person name="Buts L."/>
            <person name="Rivera-Torres J."/>
            <person name="Garcia-Pino A."/>
            <person name="Bravo J."/>
            <person name="van Nuland N.A."/>
        </authorList>
    </citation>
    <scope>STRUCTURE BY NMR OF 725-789</scope>
    <scope>X-RAY CRYSTALLOGRAPHY (2.75 ANGSTROMS) OF 725-789</scope>
    <scope>UBZ-TYPE ZINC FINGERS</scope>
</reference>
<reference key="26">
    <citation type="journal article" date="2006" name="Science">
        <title>The consensus coding sequences of human breast and colorectal cancers.</title>
        <authorList>
            <person name="Sjoeblom T."/>
            <person name="Jones S."/>
            <person name="Wood L.D."/>
            <person name="Parsons D.W."/>
            <person name="Lin J."/>
            <person name="Barber T.D."/>
            <person name="Mandelker D."/>
            <person name="Leary R.J."/>
            <person name="Ptak J."/>
            <person name="Silliman N."/>
            <person name="Szabo S."/>
            <person name="Buckhaults P."/>
            <person name="Farrell C."/>
            <person name="Meeh P."/>
            <person name="Markowitz S.D."/>
            <person name="Willis J."/>
            <person name="Dawson D."/>
            <person name="Willson J.K.V."/>
            <person name="Gazdar A.F."/>
            <person name="Hartigan J."/>
            <person name="Wu L."/>
            <person name="Liu C."/>
            <person name="Parmigiani G."/>
            <person name="Park B.H."/>
            <person name="Bachman K.E."/>
            <person name="Papadopoulos N."/>
            <person name="Vogelstein B."/>
            <person name="Kinzler K.W."/>
            <person name="Velculescu V.E."/>
        </authorList>
    </citation>
    <scope>VARIANT [LARGE SCALE ANALYSIS] ARG-457</scope>
</reference>
<reference key="27">
    <citation type="journal article" date="2011" name="Nat. Immunol.">
        <title>The kinase IKKalpha inhibits activation of the transcription factor NF-kappaB by phosphorylating the regulatory molecule TAX1BP1.</title>
        <authorList>
            <person name="Shembade N."/>
            <person name="Pujari R."/>
            <person name="Harhaj N.S."/>
            <person name="Abbott D.W."/>
            <person name="Harhaj E.W."/>
        </authorList>
    </citation>
    <scope>PHOSPHORYLATION AT SER-593 AND SER-666 BY CHUK/IKKA</scope>
</reference>
<reference key="28">
    <citation type="journal article" date="2019" name="Nat. Commun.">
        <title>Structure of Myosin VI/Tom1 complex reveals a cargo recognition mode of Myosin VI for tethering.</title>
        <authorList>
            <person name="Hu S."/>
            <person name="Guo Y."/>
            <person name="Wang Y."/>
            <person name="Li Y."/>
            <person name="Fu T."/>
            <person name="Zhou Z."/>
            <person name="Wang Y."/>
            <person name="Liu J."/>
            <person name="Pan L."/>
        </authorList>
    </citation>
    <scope>INTERACTION WITH MYO6 AND TOM1</scope>
</reference>
<reference evidence="32" key="29">
    <citation type="journal article" date="2015" name="PLoS Pathog.">
        <title>The Autophagy Receptor TAX1BP1 and the Molecular Motor Myosin VI Are Required for Clearance of Salmonella Typhimurium by Autophagy.</title>
        <authorList>
            <person name="Tumbarello D.A."/>
            <person name="Manna P.T."/>
            <person name="Allen M."/>
            <person name="Bycroft M."/>
            <person name="Arden S.D."/>
            <person name="Kendrick-Jones J."/>
            <person name="Buss F."/>
        </authorList>
    </citation>
    <scope>STRUCTURE BY NMR OF 722-784</scope>
    <scope>FUNCTION</scope>
    <scope>SUBCELLULAR LOCATION</scope>
    <scope>INTERACTION WITH MAP1LC3B AND MAP1LC3C</scope>
    <scope>MUTAGENESIS OF VAL-143</scope>
</reference>
<reference evidence="33" key="30">
    <citation type="journal article" date="2018" name="J. Mol. Biol.">
        <title>Mechanistic Insights into Recognitions of Ubiquitin and Myosin VI by Autophagy Receptor TAX1BP1.</title>
        <authorList>
            <person name="Hu S."/>
            <person name="Wang Y."/>
            <person name="Gong Y."/>
            <person name="Liu J."/>
            <person name="Li Y."/>
            <person name="Pan L."/>
        </authorList>
    </citation>
    <scope>X-RAY CRYSTALLOGRAPHY (1.50 ANGSTROMS) OF 754-787</scope>
    <scope>FUNCTION</scope>
</reference>
<reference evidence="34" key="31">
    <citation type="journal article" date="2018" name="Proc. Natl. Acad. Sci. U.S.A.">
        <title>Mechanistic insights into the interactions of NAP1 with the SKICH domains of NDP52 and TAX1BP1.</title>
        <authorList>
            <person name="Fu T."/>
            <person name="Liu J."/>
            <person name="Wang Y."/>
            <person name="Xie X."/>
            <person name="Hu S."/>
            <person name="Pan L."/>
        </authorList>
    </citation>
    <scope>X-RAY CRYSTALLOGRAPHY (2.30 ANGSTROMS) OF 1-121</scope>
    <scope>FUNCTION</scope>
    <scope>INTERACTION WITH AZI2</scope>
</reference>
<organism>
    <name type="scientific">Homo sapiens</name>
    <name type="common">Human</name>
    <dbReference type="NCBI Taxonomy" id="9606"/>
    <lineage>
        <taxon>Eukaryota</taxon>
        <taxon>Metazoa</taxon>
        <taxon>Chordata</taxon>
        <taxon>Craniata</taxon>
        <taxon>Vertebrata</taxon>
        <taxon>Euteleostomi</taxon>
        <taxon>Mammalia</taxon>
        <taxon>Eutheria</taxon>
        <taxon>Euarchontoglires</taxon>
        <taxon>Primates</taxon>
        <taxon>Haplorrhini</taxon>
        <taxon>Catarrhini</taxon>
        <taxon>Hominidae</taxon>
        <taxon>Homo</taxon>
    </lineage>
</organism>
<keyword id="KW-0002">3D-structure</keyword>
<keyword id="KW-0025">Alternative splicing</keyword>
<keyword id="KW-0053">Apoptosis</keyword>
<keyword id="KW-0072">Autophagy</keyword>
<keyword id="KW-0175">Coiled coil</keyword>
<keyword id="KW-0963">Cytoplasm</keyword>
<keyword id="KW-0968">Cytoplasmic vesicle</keyword>
<keyword id="KW-0945">Host-virus interaction</keyword>
<keyword id="KW-0391">Immunity</keyword>
<keyword id="KW-0399">Innate immunity</keyword>
<keyword id="KW-0479">Metal-binding</keyword>
<keyword id="KW-0496">Mitochondrion</keyword>
<keyword id="KW-0597">Phosphoprotein</keyword>
<keyword id="KW-1267">Proteomics identification</keyword>
<keyword id="KW-1185">Reference proteome</keyword>
<keyword id="KW-0677">Repeat</keyword>
<keyword id="KW-0862">Zinc</keyword>
<keyword id="KW-0863">Zinc-finger</keyword>
<name>TAXB1_HUMAN</name>
<accession>Q86VP1</accession>
<accession>A4D196</accession>
<accession>B4DKU7</accession>
<accession>E7ENV2</accession>
<accession>O60398</accession>
<accession>O95770</accession>
<accession>Q13311</accession>
<accession>Q9BQG5</accession>
<accession>Q9UI88</accession>
<proteinExistence type="evidence at protein level"/>
<dbReference type="EMBL" id="U33821">
    <property type="protein sequence ID" value="AAA75595.2"/>
    <property type="molecule type" value="mRNA"/>
</dbReference>
<dbReference type="EMBL" id="AF268075">
    <property type="protein sequence ID" value="AAG03025.1"/>
    <property type="molecule type" value="mRNA"/>
</dbReference>
<dbReference type="EMBL" id="AL136586">
    <property type="protein sequence ID" value="CAB66521.1"/>
    <property type="molecule type" value="mRNA"/>
</dbReference>
<dbReference type="EMBL" id="AF090891">
    <property type="protein sequence ID" value="AAF24016.1"/>
    <property type="molecule type" value="mRNA"/>
</dbReference>
<dbReference type="EMBL" id="CR457056">
    <property type="protein sequence ID" value="CAG33337.1"/>
    <property type="molecule type" value="mRNA"/>
</dbReference>
<dbReference type="EMBL" id="AK296720">
    <property type="protein sequence ID" value="BAG59309.1"/>
    <property type="molecule type" value="mRNA"/>
</dbReference>
<dbReference type="EMBL" id="AK314292">
    <property type="protein sequence ID" value="BAG36949.1"/>
    <property type="molecule type" value="mRNA"/>
</dbReference>
<dbReference type="EMBL" id="CR533556">
    <property type="protein sequence ID" value="CAG38587.1"/>
    <property type="molecule type" value="mRNA"/>
</dbReference>
<dbReference type="EMBL" id="AC004549">
    <property type="protein sequence ID" value="AAC13359.2"/>
    <property type="status" value="ALT_SEQ"/>
    <property type="molecule type" value="Genomic_DNA"/>
</dbReference>
<dbReference type="EMBL" id="AC005091">
    <property type="protein sequence ID" value="AAD15412.1"/>
    <property type="molecule type" value="Genomic_DNA"/>
</dbReference>
<dbReference type="EMBL" id="CH236948">
    <property type="protein sequence ID" value="EAL24213.1"/>
    <property type="molecule type" value="Genomic_DNA"/>
</dbReference>
<dbReference type="EMBL" id="CH471073">
    <property type="protein sequence ID" value="EAW93901.1"/>
    <property type="molecule type" value="Genomic_DNA"/>
</dbReference>
<dbReference type="EMBL" id="CH471073">
    <property type="protein sequence ID" value="EAW93904.1"/>
    <property type="molecule type" value="Genomic_DNA"/>
</dbReference>
<dbReference type="EMBL" id="BC050358">
    <property type="protein sequence ID" value="AAH50358.1"/>
    <property type="molecule type" value="mRNA"/>
</dbReference>
<dbReference type="CCDS" id="CCDS43561.1">
    <molecule id="Q86VP1-2"/>
</dbReference>
<dbReference type="CCDS" id="CCDS5415.1">
    <molecule id="Q86VP1-1"/>
</dbReference>
<dbReference type="CCDS" id="CCDS56471.1">
    <molecule id="Q86VP1-4"/>
</dbReference>
<dbReference type="PIR" id="G02043">
    <property type="entry name" value="G02043"/>
</dbReference>
<dbReference type="RefSeq" id="NP_001073333.1">
    <molecule id="Q86VP1-2"/>
    <property type="nucleotide sequence ID" value="NM_001079864.3"/>
</dbReference>
<dbReference type="RefSeq" id="NP_001193830.1">
    <molecule id="Q86VP1-2"/>
    <property type="nucleotide sequence ID" value="NM_001206901.1"/>
</dbReference>
<dbReference type="RefSeq" id="NP_001193831.1">
    <molecule id="Q86VP1-4"/>
    <property type="nucleotide sequence ID" value="NM_001206902.2"/>
</dbReference>
<dbReference type="RefSeq" id="NP_006015.4">
    <molecule id="Q86VP1-1"/>
    <property type="nucleotide sequence ID" value="NM_006024.6"/>
</dbReference>
<dbReference type="PDB" id="2M7Q">
    <property type="method" value="NMR"/>
    <property type="chains" value="A=725-789"/>
</dbReference>
<dbReference type="PDB" id="4BMJ">
    <property type="method" value="X-ray"/>
    <property type="resolution" value="2.75 A"/>
    <property type="chains" value="A/B/C/D/E/F/G/H/I/J/K=725-789"/>
</dbReference>
<dbReference type="PDB" id="4NLH">
    <property type="method" value="X-ray"/>
    <property type="resolution" value="1.90 A"/>
    <property type="chains" value="A/B=15-147"/>
</dbReference>
<dbReference type="PDB" id="4Z4K">
    <property type="method" value="X-ray"/>
    <property type="resolution" value="2.80 A"/>
    <property type="chains" value="A/B=725-781"/>
</dbReference>
<dbReference type="PDB" id="4Z4M">
    <property type="method" value="X-ray"/>
    <property type="resolution" value="2.15 A"/>
    <property type="chains" value="A/B=755-781"/>
</dbReference>
<dbReference type="PDB" id="5AAS">
    <property type="method" value="NMR"/>
    <property type="chains" value="A=722-784"/>
</dbReference>
<dbReference type="PDB" id="5YT6">
    <property type="method" value="X-ray"/>
    <property type="resolution" value="1.50 A"/>
    <property type="chains" value="B/D/F/H=754-787"/>
</dbReference>
<dbReference type="PDB" id="5Z7G">
    <property type="method" value="X-ray"/>
    <property type="resolution" value="2.30 A"/>
    <property type="chains" value="A/B=1-121"/>
</dbReference>
<dbReference type="PDB" id="8W6A">
    <property type="method" value="X-ray"/>
    <property type="resolution" value="1.53 A"/>
    <property type="chains" value="C/E/F/H=123-151"/>
</dbReference>
<dbReference type="PDB" id="8W6B">
    <property type="method" value="X-ray"/>
    <property type="resolution" value="2.39 A"/>
    <property type="chains" value="A/B/E/F=1-121"/>
</dbReference>
<dbReference type="PDBsum" id="2M7Q"/>
<dbReference type="PDBsum" id="4BMJ"/>
<dbReference type="PDBsum" id="4NLH"/>
<dbReference type="PDBsum" id="4Z4K"/>
<dbReference type="PDBsum" id="4Z4M"/>
<dbReference type="PDBsum" id="5AAS"/>
<dbReference type="PDBsum" id="5YT6"/>
<dbReference type="PDBsum" id="5Z7G"/>
<dbReference type="PDBsum" id="8W6A"/>
<dbReference type="PDBsum" id="8W6B"/>
<dbReference type="BMRB" id="Q86VP1"/>
<dbReference type="SMR" id="Q86VP1"/>
<dbReference type="BioGRID" id="114405">
    <property type="interactions" value="355"/>
</dbReference>
<dbReference type="DIP" id="DIP-33010N"/>
<dbReference type="FunCoup" id="Q86VP1">
    <property type="interactions" value="1277"/>
</dbReference>
<dbReference type="IntAct" id="Q86VP1">
    <property type="interactions" value="139"/>
</dbReference>
<dbReference type="MINT" id="Q86VP1"/>
<dbReference type="STRING" id="9606.ENSP00000379612"/>
<dbReference type="MoonDB" id="Q86VP1">
    <property type="type" value="Predicted"/>
</dbReference>
<dbReference type="GlyGen" id="Q86VP1">
    <property type="glycosylation" value="2 sites, 2 O-linked glycans (2 sites)"/>
</dbReference>
<dbReference type="iPTMnet" id="Q86VP1"/>
<dbReference type="PhosphoSitePlus" id="Q86VP1"/>
<dbReference type="BioMuta" id="TAX1BP1"/>
<dbReference type="DMDM" id="97202549"/>
<dbReference type="jPOST" id="Q86VP1"/>
<dbReference type="MassIVE" id="Q86VP1"/>
<dbReference type="PaxDb" id="9606-ENSP00000379612"/>
<dbReference type="PeptideAtlas" id="Q86VP1"/>
<dbReference type="ProteomicsDB" id="17229"/>
<dbReference type="ProteomicsDB" id="70045">
    <molecule id="Q86VP1-1"/>
</dbReference>
<dbReference type="ProteomicsDB" id="70046">
    <molecule id="Q86VP1-2"/>
</dbReference>
<dbReference type="ProteomicsDB" id="70047">
    <molecule id="Q86VP1-3"/>
</dbReference>
<dbReference type="Pumba" id="Q86VP1"/>
<dbReference type="Antibodypedia" id="12449">
    <property type="antibodies" value="245 antibodies from 29 providers"/>
</dbReference>
<dbReference type="DNASU" id="8887"/>
<dbReference type="Ensembl" id="ENST00000265393.10">
    <molecule id="Q86VP1-2"/>
    <property type="protein sequence ID" value="ENSP00000265393.6"/>
    <property type="gene ID" value="ENSG00000106052.14"/>
</dbReference>
<dbReference type="Ensembl" id="ENST00000396319.7">
    <molecule id="Q86VP1-1"/>
    <property type="protein sequence ID" value="ENSP00000379612.2"/>
    <property type="gene ID" value="ENSG00000106052.14"/>
</dbReference>
<dbReference type="Ensembl" id="ENST00000433216.6">
    <molecule id="Q86VP1-4"/>
    <property type="protein sequence ID" value="ENSP00000391907.2"/>
    <property type="gene ID" value="ENSG00000106052.14"/>
</dbReference>
<dbReference type="Ensembl" id="ENST00000543117.5">
    <molecule id="Q86VP1-2"/>
    <property type="protein sequence ID" value="ENSP00000444811.1"/>
    <property type="gene ID" value="ENSG00000106052.14"/>
</dbReference>
<dbReference type="GeneID" id="8887"/>
<dbReference type="KEGG" id="hsa:8887"/>
<dbReference type="MANE-Select" id="ENST00000396319.7">
    <property type="protein sequence ID" value="ENSP00000379612.2"/>
    <property type="RefSeq nucleotide sequence ID" value="NM_006024.7"/>
    <property type="RefSeq protein sequence ID" value="NP_006015.4"/>
</dbReference>
<dbReference type="UCSC" id="uc003szk.4">
    <molecule id="Q86VP1-1"/>
    <property type="organism name" value="human"/>
</dbReference>
<dbReference type="AGR" id="HGNC:11575"/>
<dbReference type="CTD" id="8887"/>
<dbReference type="DisGeNET" id="8887"/>
<dbReference type="GeneCards" id="TAX1BP1"/>
<dbReference type="HGNC" id="HGNC:11575">
    <property type="gene designation" value="TAX1BP1"/>
</dbReference>
<dbReference type="HPA" id="ENSG00000106052">
    <property type="expression patterns" value="Low tissue specificity"/>
</dbReference>
<dbReference type="MIM" id="605326">
    <property type="type" value="gene"/>
</dbReference>
<dbReference type="neXtProt" id="NX_Q86VP1"/>
<dbReference type="OpenTargets" id="ENSG00000106052"/>
<dbReference type="PharmGKB" id="PA36339"/>
<dbReference type="VEuPathDB" id="HostDB:ENSG00000106052"/>
<dbReference type="eggNOG" id="ENOG502QQ1D">
    <property type="taxonomic scope" value="Eukaryota"/>
</dbReference>
<dbReference type="GeneTree" id="ENSGT00950000183025"/>
<dbReference type="HOGENOM" id="CLU_021315_1_0_1"/>
<dbReference type="InParanoid" id="Q86VP1"/>
<dbReference type="OrthoDB" id="10015001at2759"/>
<dbReference type="PAN-GO" id="Q86VP1">
    <property type="GO annotations" value="1 GO annotation based on evolutionary models"/>
</dbReference>
<dbReference type="PhylomeDB" id="Q86VP1"/>
<dbReference type="TreeFam" id="TF329501"/>
<dbReference type="PathwayCommons" id="Q86VP1"/>
<dbReference type="Reactome" id="R-HSA-5357905">
    <property type="pathway name" value="Regulation of TNFR1 signaling"/>
</dbReference>
<dbReference type="Reactome" id="R-HSA-936440">
    <property type="pathway name" value="Negative regulators of DDX58/IFIH1 signaling"/>
</dbReference>
<dbReference type="SignaLink" id="Q86VP1"/>
<dbReference type="SIGNOR" id="Q86VP1"/>
<dbReference type="BioGRID-ORCS" id="8887">
    <property type="hits" value="35 hits in 1161 CRISPR screens"/>
</dbReference>
<dbReference type="ChiTaRS" id="TAX1BP1">
    <property type="organism name" value="human"/>
</dbReference>
<dbReference type="EvolutionaryTrace" id="Q86VP1"/>
<dbReference type="GeneWiki" id="TAX1BP1"/>
<dbReference type="GenomeRNAi" id="8887"/>
<dbReference type="Pharos" id="Q86VP1">
    <property type="development level" value="Tbio"/>
</dbReference>
<dbReference type="PRO" id="PR:Q86VP1"/>
<dbReference type="Proteomes" id="UP000005640">
    <property type="component" value="Chromosome 7"/>
</dbReference>
<dbReference type="RNAct" id="Q86VP1">
    <property type="molecule type" value="protein"/>
</dbReference>
<dbReference type="Bgee" id="ENSG00000106052">
    <property type="expression patterns" value="Expressed in secondary oocyte and 213 other cell types or tissues"/>
</dbReference>
<dbReference type="ExpressionAtlas" id="Q86VP1">
    <property type="expression patterns" value="baseline and differential"/>
</dbReference>
<dbReference type="GO" id="GO:0005776">
    <property type="term" value="C:autophagosome"/>
    <property type="evidence" value="ECO:0007669"/>
    <property type="project" value="UniProtKB-SubCell"/>
</dbReference>
<dbReference type="GO" id="GO:0005737">
    <property type="term" value="C:cytoplasm"/>
    <property type="evidence" value="ECO:0000314"/>
    <property type="project" value="UniProt"/>
</dbReference>
<dbReference type="GO" id="GO:0031410">
    <property type="term" value="C:cytoplasmic vesicle"/>
    <property type="evidence" value="ECO:0007669"/>
    <property type="project" value="UniProtKB-KW"/>
</dbReference>
<dbReference type="GO" id="GO:0005829">
    <property type="term" value="C:cytosol"/>
    <property type="evidence" value="ECO:0000304"/>
    <property type="project" value="Reactome"/>
</dbReference>
<dbReference type="GO" id="GO:0070062">
    <property type="term" value="C:extracellular exosome"/>
    <property type="evidence" value="ECO:0007005"/>
    <property type="project" value="UniProtKB"/>
</dbReference>
<dbReference type="GO" id="GO:0005739">
    <property type="term" value="C:mitochondrion"/>
    <property type="evidence" value="ECO:0000314"/>
    <property type="project" value="UniProt"/>
</dbReference>
<dbReference type="GO" id="GO:0000407">
    <property type="term" value="C:phagophore assembly site"/>
    <property type="evidence" value="ECO:0007669"/>
    <property type="project" value="UniProtKB-SubCell"/>
</dbReference>
<dbReference type="GO" id="GO:0019900">
    <property type="term" value="F:kinase binding"/>
    <property type="evidence" value="ECO:0000250"/>
    <property type="project" value="BHF-UCL"/>
</dbReference>
<dbReference type="GO" id="GO:0030674">
    <property type="term" value="F:protein-macromolecule adaptor activity"/>
    <property type="evidence" value="ECO:0000314"/>
    <property type="project" value="UniProt"/>
</dbReference>
<dbReference type="GO" id="GO:0035591">
    <property type="term" value="F:signaling adaptor activity"/>
    <property type="evidence" value="ECO:0000314"/>
    <property type="project" value="BHF-UCL"/>
</dbReference>
<dbReference type="GO" id="GO:0008270">
    <property type="term" value="F:zinc ion binding"/>
    <property type="evidence" value="ECO:0007669"/>
    <property type="project" value="UniProtKB-KW"/>
</dbReference>
<dbReference type="GO" id="GO:0006915">
    <property type="term" value="P:apoptotic process"/>
    <property type="evidence" value="ECO:0007669"/>
    <property type="project" value="UniProtKB-KW"/>
</dbReference>
<dbReference type="GO" id="GO:0006914">
    <property type="term" value="P:autophagy"/>
    <property type="evidence" value="ECO:0007669"/>
    <property type="project" value="UniProtKB-KW"/>
</dbReference>
<dbReference type="GO" id="GO:0045087">
    <property type="term" value="P:innate immune response"/>
    <property type="evidence" value="ECO:0007669"/>
    <property type="project" value="UniProtKB-KW"/>
</dbReference>
<dbReference type="GO" id="GO:0043066">
    <property type="term" value="P:negative regulation of apoptotic process"/>
    <property type="evidence" value="ECO:0000318"/>
    <property type="project" value="GO_Central"/>
</dbReference>
<dbReference type="GO" id="GO:0043124">
    <property type="term" value="P:negative regulation of canonical NF-kappaB signal transduction"/>
    <property type="evidence" value="ECO:0000250"/>
    <property type="project" value="BHF-UCL"/>
</dbReference>
<dbReference type="GO" id="GO:0039532">
    <property type="term" value="P:negative regulation of cytoplasmic pattern recognition receptor signaling pathway"/>
    <property type="evidence" value="ECO:0000314"/>
    <property type="project" value="UniProt"/>
</dbReference>
<dbReference type="GO" id="GO:2000660">
    <property type="term" value="P:negative regulation of interleukin-1-mediated signaling pathway"/>
    <property type="evidence" value="ECO:0000314"/>
    <property type="project" value="BHF-UCL"/>
</dbReference>
<dbReference type="GO" id="GO:0034144">
    <property type="term" value="P:negative regulation of toll-like receptor 4 signaling pathway"/>
    <property type="evidence" value="ECO:0000314"/>
    <property type="project" value="UniProt"/>
</dbReference>
<dbReference type="GO" id="GO:0010804">
    <property type="term" value="P:negative regulation of tumor necrosis factor-mediated signaling pathway"/>
    <property type="evidence" value="ECO:0000314"/>
    <property type="project" value="BHF-UCL"/>
</dbReference>
<dbReference type="GO" id="GO:1905161">
    <property type="term" value="P:protein localization to phagocytic vesicle"/>
    <property type="evidence" value="ECO:0000314"/>
    <property type="project" value="UniProt"/>
</dbReference>
<dbReference type="CDD" id="cd21969">
    <property type="entry name" value="Zn-C2H2_TAX1BP1_rpt1"/>
    <property type="match status" value="1"/>
</dbReference>
<dbReference type="CDD" id="cd21970">
    <property type="entry name" value="Zn-C2H2_TAX1BP1_rpt2"/>
    <property type="match status" value="1"/>
</dbReference>
<dbReference type="FunFam" id="2.60.40.2840:FF:000002">
    <property type="entry name" value="Tax1-binding protein 1 isoform 2"/>
    <property type="match status" value="1"/>
</dbReference>
<dbReference type="Gene3D" id="2.60.40.2840">
    <property type="match status" value="1"/>
</dbReference>
<dbReference type="Gene3D" id="6.20.250.40">
    <property type="match status" value="1"/>
</dbReference>
<dbReference type="InterPro" id="IPR012852">
    <property type="entry name" value="CALCOCO1-like"/>
</dbReference>
<dbReference type="InterPro" id="IPR041641">
    <property type="entry name" value="CALCOCO1/2_Zn_UBZ1"/>
</dbReference>
<dbReference type="InterPro" id="IPR041611">
    <property type="entry name" value="SKICH"/>
</dbReference>
<dbReference type="InterPro" id="IPR051002">
    <property type="entry name" value="UBA_autophagy_assoc_protein"/>
</dbReference>
<dbReference type="PANTHER" id="PTHR31915">
    <property type="entry name" value="SKICH DOMAIN-CONTAINING PROTEIN"/>
    <property type="match status" value="1"/>
</dbReference>
<dbReference type="PANTHER" id="PTHR31915:SF8">
    <property type="entry name" value="TAX1-BINDING PROTEIN 1"/>
    <property type="match status" value="1"/>
</dbReference>
<dbReference type="Pfam" id="PF07888">
    <property type="entry name" value="CALCOCO1"/>
    <property type="match status" value="1"/>
</dbReference>
<dbReference type="Pfam" id="PF17751">
    <property type="entry name" value="SKICH"/>
    <property type="match status" value="1"/>
</dbReference>
<dbReference type="Pfam" id="PF18112">
    <property type="entry name" value="Zn-C2H2_12"/>
    <property type="match status" value="2"/>
</dbReference>
<dbReference type="PROSITE" id="PS51905">
    <property type="entry name" value="ZF_UBZ1"/>
    <property type="match status" value="2"/>
</dbReference>